<proteinExistence type="evidence at protein level"/>
<reference key="1">
    <citation type="journal article" date="1991" name="Biochemistry">
        <title>Cloning and expression of complementary DNAs for multiple members of the human cytochrome P450IIC subfamily.</title>
        <authorList>
            <person name="Romkes M."/>
            <person name="Faletto M.B."/>
            <person name="Blaisdell J.A."/>
            <person name="Raucy J.L."/>
            <person name="Goldstein J.A."/>
        </authorList>
    </citation>
    <scope>NUCLEOTIDE SEQUENCE [MRNA] (ALLELE CYP2C19*1A)</scope>
    <scope>VARIANT VAL-331</scope>
    <source>
        <tissue>Liver</tissue>
    </source>
</reference>
<reference key="2">
    <citation type="journal article" date="1993" name="Biochemistry">
        <authorList>
            <person name="Romkes M."/>
            <person name="Faletto M.B."/>
            <person name="Blaisdell J.A."/>
            <person name="Raucy J.L."/>
            <person name="Goldstein J.A."/>
        </authorList>
    </citation>
    <scope>ERRATUM OF PUBMED:2009263</scope>
    <scope>SEQUENCE REVISION</scope>
</reference>
<reference key="3">
    <citation type="submission" date="2004-10" db="EMBL/GenBank/DDBJ databases">
        <authorList>
            <consortium name="NIEHS SNPs program"/>
        </authorList>
    </citation>
    <scope>NUCLEOTIDE SEQUENCE [GENOMIC DNA]</scope>
    <scope>VARIANTS LEU-19; ASP-92; ALA-122; HIS-144; VAL-331 AND CYS-410</scope>
</reference>
<reference key="4">
    <citation type="journal article" date="2004" name="Nature">
        <title>The DNA sequence and comparative analysis of human chromosome 10.</title>
        <authorList>
            <person name="Deloukas P."/>
            <person name="Earthrowl M.E."/>
            <person name="Grafham D.V."/>
            <person name="Rubenfield M."/>
            <person name="French L."/>
            <person name="Steward C.A."/>
            <person name="Sims S.K."/>
            <person name="Jones M.C."/>
            <person name="Searle S."/>
            <person name="Scott C."/>
            <person name="Howe K."/>
            <person name="Hunt S.E."/>
            <person name="Andrews T.D."/>
            <person name="Gilbert J.G.R."/>
            <person name="Swarbreck D."/>
            <person name="Ashurst J.L."/>
            <person name="Taylor A."/>
            <person name="Battles J."/>
            <person name="Bird C.P."/>
            <person name="Ainscough R."/>
            <person name="Almeida J.P."/>
            <person name="Ashwell R.I.S."/>
            <person name="Ambrose K.D."/>
            <person name="Babbage A.K."/>
            <person name="Bagguley C.L."/>
            <person name="Bailey J."/>
            <person name="Banerjee R."/>
            <person name="Bates K."/>
            <person name="Beasley H."/>
            <person name="Bray-Allen S."/>
            <person name="Brown A.J."/>
            <person name="Brown J.Y."/>
            <person name="Burford D.C."/>
            <person name="Burrill W."/>
            <person name="Burton J."/>
            <person name="Cahill P."/>
            <person name="Camire D."/>
            <person name="Carter N.P."/>
            <person name="Chapman J.C."/>
            <person name="Clark S.Y."/>
            <person name="Clarke G."/>
            <person name="Clee C.M."/>
            <person name="Clegg S."/>
            <person name="Corby N."/>
            <person name="Coulson A."/>
            <person name="Dhami P."/>
            <person name="Dutta I."/>
            <person name="Dunn M."/>
            <person name="Faulkner L."/>
            <person name="Frankish A."/>
            <person name="Frankland J.A."/>
            <person name="Garner P."/>
            <person name="Garnett J."/>
            <person name="Gribble S."/>
            <person name="Griffiths C."/>
            <person name="Grocock R."/>
            <person name="Gustafson E."/>
            <person name="Hammond S."/>
            <person name="Harley J.L."/>
            <person name="Hart E."/>
            <person name="Heath P.D."/>
            <person name="Ho T.P."/>
            <person name="Hopkins B."/>
            <person name="Horne J."/>
            <person name="Howden P.J."/>
            <person name="Huckle E."/>
            <person name="Hynds C."/>
            <person name="Johnson C."/>
            <person name="Johnson D."/>
            <person name="Kana A."/>
            <person name="Kay M."/>
            <person name="Kimberley A.M."/>
            <person name="Kershaw J.K."/>
            <person name="Kokkinaki M."/>
            <person name="Laird G.K."/>
            <person name="Lawlor S."/>
            <person name="Lee H.M."/>
            <person name="Leongamornlert D.A."/>
            <person name="Laird G."/>
            <person name="Lloyd C."/>
            <person name="Lloyd D.M."/>
            <person name="Loveland J."/>
            <person name="Lovell J."/>
            <person name="McLaren S."/>
            <person name="McLay K.E."/>
            <person name="McMurray A."/>
            <person name="Mashreghi-Mohammadi M."/>
            <person name="Matthews L."/>
            <person name="Milne S."/>
            <person name="Nickerson T."/>
            <person name="Nguyen M."/>
            <person name="Overton-Larty E."/>
            <person name="Palmer S.A."/>
            <person name="Pearce A.V."/>
            <person name="Peck A.I."/>
            <person name="Pelan S."/>
            <person name="Phillimore B."/>
            <person name="Porter K."/>
            <person name="Rice C.M."/>
            <person name="Rogosin A."/>
            <person name="Ross M.T."/>
            <person name="Sarafidou T."/>
            <person name="Sehra H.K."/>
            <person name="Shownkeen R."/>
            <person name="Skuce C.D."/>
            <person name="Smith M."/>
            <person name="Standring L."/>
            <person name="Sycamore N."/>
            <person name="Tester J."/>
            <person name="Thorpe A."/>
            <person name="Torcasso W."/>
            <person name="Tracey A."/>
            <person name="Tromans A."/>
            <person name="Tsolas J."/>
            <person name="Wall M."/>
            <person name="Walsh J."/>
            <person name="Wang H."/>
            <person name="Weinstock K."/>
            <person name="West A.P."/>
            <person name="Willey D.L."/>
            <person name="Whitehead S.L."/>
            <person name="Wilming L."/>
            <person name="Wray P.W."/>
            <person name="Young L."/>
            <person name="Chen Y."/>
            <person name="Lovering R.C."/>
            <person name="Moschonas N.K."/>
            <person name="Siebert R."/>
            <person name="Fechtel K."/>
            <person name="Bentley D."/>
            <person name="Durbin R.M."/>
            <person name="Hubbard T."/>
            <person name="Doucette-Stamm L."/>
            <person name="Beck S."/>
            <person name="Smith D.R."/>
            <person name="Rogers J."/>
        </authorList>
    </citation>
    <scope>NUCLEOTIDE SEQUENCE [LARGE SCALE GENOMIC DNA]</scope>
</reference>
<reference key="5">
    <citation type="submission" date="2001-11" db="EMBL/GenBank/DDBJ databases">
        <title>Gene structure, upstream region and allelic variants of cyp2c19, the s-mephenytoin hydroxylase.</title>
        <authorList>
            <person name="de Morais S.M.F."/>
            <person name="Blaisdell J.A."/>
        </authorList>
    </citation>
    <scope>NUCLEOTIDE SEQUENCE [GENOMIC DNA] OF 1-160 AND 274-490</scope>
</reference>
<reference key="6">
    <citation type="journal article" date="1993" name="Arch. Biochem. Biophys.">
        <title>Isolation and characterization of human liver cytochrome P450 2C19: correlation between 2C19 and S-mephenytoin 4'-hydroxylation.</title>
        <authorList>
            <person name="Wrighton S.A."/>
            <person name="Stevens J.C."/>
            <person name="Becker G.W."/>
            <person name="VandenBranden M."/>
        </authorList>
    </citation>
    <scope>PROTEIN SEQUENCE OF 1-16</scope>
    <source>
        <tissue>Liver</tissue>
    </source>
</reference>
<reference key="7">
    <citation type="journal article" date="2002" name="Drug Metab. Dispos.">
        <title>Metabolism of (+)- and (-)-limonenes to respective carveols and perillyl alcohols by CYP2C9 and CYP2C19 in human liver microsomes.</title>
        <authorList>
            <person name="Miyazawa M."/>
            <person name="Shindo M."/>
            <person name="Shimada T."/>
        </authorList>
    </citation>
    <scope>FUNCTION</scope>
    <scope>CATALYTIC ACTIVITY</scope>
    <scope>PATHWAY</scope>
</reference>
<reference key="8">
    <citation type="journal article" date="2008" name="J. Lipid Res.">
        <title>Cytochromes P450 from family 4 are the main omega hydroxylating enzymes in humans: CYP4F3B is the prominent player in PUFA metabolism.</title>
        <authorList>
            <person name="Fer M."/>
            <person name="Corcos L."/>
            <person name="Dreano Y."/>
            <person name="Plee-Gautier E."/>
            <person name="Salaun J.P."/>
            <person name="Berthou F."/>
            <person name="Amet Y."/>
        </authorList>
    </citation>
    <scope>FUNCTION</scope>
    <scope>CATALYTIC ACTIVITY</scope>
    <scope>PATHWAY</scope>
</reference>
<reference key="9">
    <citation type="journal article" date="2010" name="J. Lipid Res.">
        <title>Stereoselective epoxidation of the last double bond of polyunsaturated fatty acids by human cytochromes P450.</title>
        <authorList>
            <person name="Lucas D."/>
            <person name="Goulitquer S."/>
            <person name="Marienhagen J."/>
            <person name="Fer M."/>
            <person name="Dreano Y."/>
            <person name="Schwaneberg U."/>
            <person name="Amet Y."/>
            <person name="Corcos L."/>
        </authorList>
    </citation>
    <scope>FUNCTION</scope>
    <scope>CATALYTIC ACTIVITY</scope>
    <scope>PATHWAY</scope>
</reference>
<reference key="10">
    <citation type="journal article" date="2010" name="Rapid Commun. Mass Spectrom.">
        <title>Analysis of epoxyeicosatrienoic acids by chiral liquid chromatography/electron capture atmospheric pressure chemical ionization mass spectrometry using [13C]-analog internal standards.</title>
        <authorList>
            <person name="Mesaros C."/>
            <person name="Lee S.H."/>
            <person name="Blair I.A."/>
        </authorList>
    </citation>
    <scope>FUNCTION</scope>
    <scope>CATALYTIC ACTIVITY</scope>
    <scope>PATHWAY</scope>
</reference>
<reference key="11">
    <citation type="journal article" date="2013" name="Antimicrob. Agents Chemother.">
        <title>CYP2J2 and CYP2C19 are the major enzymes responsible for metabolism of albendazole and fenbendazole in human liver microsomes and recombinant P450 assay systems.</title>
        <authorList>
            <person name="Wu Z."/>
            <person name="Lee D."/>
            <person name="Joo J."/>
            <person name="Shin J.H."/>
            <person name="Kang W."/>
            <person name="Oh S."/>
            <person name="Lee D.Y."/>
            <person name="Lee S.J."/>
            <person name="Yea S.S."/>
            <person name="Lee H.S."/>
            <person name="Lee T."/>
            <person name="Liu K.H."/>
        </authorList>
    </citation>
    <scope>FUNCTION</scope>
    <scope>CATALYTIC ACTIVITY</scope>
</reference>
<reference key="12">
    <citation type="journal article" date="2014" name="J. Proteomics">
        <title>An enzyme assisted RP-RPLC approach for in-depth analysis of human liver phosphoproteome.</title>
        <authorList>
            <person name="Bian Y."/>
            <person name="Song C."/>
            <person name="Cheng K."/>
            <person name="Dong M."/>
            <person name="Wang F."/>
            <person name="Huang J."/>
            <person name="Sun D."/>
            <person name="Wang L."/>
            <person name="Ye M."/>
            <person name="Zou H."/>
        </authorList>
    </citation>
    <scope>IDENTIFICATION BY MASS SPECTROMETRY [LARGE SCALE ANALYSIS]</scope>
    <source>
        <tissue>Liver</tissue>
    </source>
</reference>
<reference key="13">
    <citation type="journal article" date="2017" name="Clin. Pharmacol. Ther.">
        <title>Worldwide Distribution of Cytochrome P450 Alleles: A Meta-analysis of Population-scale Sequencing Projects.</title>
        <authorList>
            <person name="Zhou Y."/>
            <person name="Ingelman-Sundberg M."/>
            <person name="Lauschke V.M."/>
        </authorList>
    </citation>
    <scope>POLYMORPHISM</scope>
</reference>
<reference key="14">
    <citation type="journal article" date="2012" name="J. Biol. Chem.">
        <title>Structural characterization of human cytochrome P450 2C19: active site differences between P450s 2C8, 2C9, and 2C19.</title>
        <authorList>
            <person name="Reynald R.L."/>
            <person name="Sansen S."/>
            <person name="Stout C.D."/>
            <person name="Johnson E.F."/>
        </authorList>
    </citation>
    <scope>X-RAY CRYSTALLOGRAPHY (2.87 ANGSTROMS) OF 23-489 IN COMPLEX WITH HEME AND SYNTHETIC INHIBITOR</scope>
    <scope>COFACTOR</scope>
</reference>
<reference key="15">
    <citation type="journal article" date="1994" name="J. Biol. Chem.">
        <title>The major genetic defect responsible for the polymorphism of S-mephenytoin metabolism in humans.</title>
        <authorList>
            <person name="de Morais S.M.F."/>
            <person name="Wilkinson G.R."/>
            <person name="Blaisdell J."/>
            <person name="Nakamura K."/>
            <person name="Meyer U.A."/>
            <person name="Goldstein J.A."/>
        </authorList>
    </citation>
    <scope>INVOLVEMENT IN POOR DRUG METABOLISM</scope>
    <scope>IDENTIFICATION OF ALLELE CYP2C19*2A</scope>
</reference>
<reference key="16">
    <citation type="journal article" date="1994" name="Mol. Pharmacol.">
        <title>Identification of a new genetic defect responsible for the polymorphism of (S)-mephenytoin metabolism in Japanese.</title>
        <authorList>
            <person name="De Morais S.M.F."/>
            <person name="Wilkinson G.R."/>
            <person name="Blaisdell J."/>
            <person name="Meyer U.A."/>
            <person name="Nakamura K."/>
            <person name="Goldstein J.A."/>
        </authorList>
    </citation>
    <scope>INVOLVEMENT IN POOR DRUG METABOLISM</scope>
    <scope>IDENTIFICATION OF ALLELE CYP2C19*3A</scope>
</reference>
<reference key="17">
    <citation type="journal article" date="1997" name="J. Pharmacol. Exp. Ther.">
        <title>Differences in the incidence of the CYP2C19 polymorphism affecting the S-mephenytoin phenotype in Chinese Han and Bai populations and identification of a new rare CYP2C19 mutant allele.</title>
        <authorList>
            <person name="Xiao Z.S."/>
            <person name="Goldstein J.A."/>
            <person name="Xie H.G."/>
            <person name="Blaisdell J."/>
            <person name="Wang W."/>
            <person name="Jiang C.H."/>
            <person name="Yan F.X."/>
            <person name="He N."/>
            <person name="Huang S.L."/>
            <person name="Xu Z.H."/>
            <person name="Zhou H.H."/>
        </authorList>
    </citation>
    <scope>VARIANT TRP-433</scope>
</reference>
<reference key="18">
    <citation type="journal article" date="1998" name="J. Pharmacol. Exp. Ther.">
        <title>Identification of new human CYP2C19 alleles (CYP2C19*6 and CYP2C19*2B) in a Caucasian poor metabolizer of mephenytoin.</title>
        <authorList>
            <person name="Ibeanu G.C."/>
            <person name="Goldstein J.A."/>
            <person name="Meyer U.A."/>
            <person name="Benhamou S."/>
            <person name="Bouchardy C."/>
            <person name="Dayer P."/>
            <person name="Ghanayem B.I."/>
            <person name="Blaisdell J."/>
        </authorList>
    </citation>
    <scope>VARIANTS ASP-92 AND GLN-132</scope>
</reference>
<reference key="19">
    <citation type="journal article" date="1998" name="Pharmacogenetics">
        <title>An additional defective allele, CYP2C19*5, contributes to the S-mephenytoin poor metabolizer phenotype in Caucasians.</title>
        <authorList>
            <person name="Ibeanu G.C."/>
            <person name="Blaisdell J."/>
            <person name="Ghanayem B.I."/>
            <person name="Beyeler C."/>
            <person name="Benhamou S."/>
            <person name="Bouchardy C."/>
            <person name="Wilkinson G.R."/>
            <person name="Dayer P."/>
            <person name="Daly A.K."/>
            <person name="Goldstein J.A."/>
        </authorList>
    </citation>
    <scope>VARIANT TRP-433</scope>
</reference>
<reference key="20">
    <citation type="journal article" date="1999" name="J. Pharmacol. Exp. Ther.">
        <title>A novel transversion in the intron 5 donor splice junction of CYP2C19 and a sequence polymorphism in exon 3 contribute to the poor metabolizer phenotype for the anticonvulsant drug S-mephenytoin.</title>
        <authorList>
            <person name="Ibeanu G.C."/>
            <person name="Blaisdell J."/>
            <person name="Ferguson R.J."/>
            <person name="Ghanayem B.I."/>
            <person name="Brosen K."/>
            <person name="Benhamou S."/>
            <person name="Bouchardy C."/>
            <person name="Wilkinson G.R."/>
            <person name="Dayer P."/>
            <person name="Goldstein J.A."/>
        </authorList>
    </citation>
    <scope>VARIANT ARG-120</scope>
</reference>
<reference key="21">
    <citation type="journal article" date="2002" name="Pharmacogenetics">
        <title>Identification and functional characterization of new potentially defective alleles of human CYP2C19.</title>
        <authorList>
            <person name="Blaisdell J."/>
            <person name="Mohrenweiser H."/>
            <person name="Jackson J."/>
            <person name="Ferguson S."/>
            <person name="Coulter S."/>
            <person name="Chanas B."/>
            <person name="Xi T."/>
            <person name="Ghanayem B."/>
            <person name="Goldstein J.A."/>
        </authorList>
    </citation>
    <scope>VARIANTS PRO-17; LEU-19; HIS-144; HIS-150; LEU-227 AND CYS-410</scope>
</reference>
<reference key="22">
    <citation type="journal article" date="2004" name="Drug Metab. Pharmacokinet.">
        <title>A novel single nucleotide polymorphism (SNP) of the CYP2C19 gene in a Japanese subject with lowered capacity of mephobarbital 4'-hydroxylation.</title>
        <authorList>
            <person name="Morita J."/>
            <person name="Kobayashi K."/>
            <person name="Wanibuchi A."/>
            <person name="Kimura M."/>
            <person name="Irie S."/>
            <person name="Ishizaki T."/>
            <person name="Chiba K."/>
        </authorList>
    </citation>
    <scope>VARIANT CYS-442</scope>
</reference>
<reference key="23">
    <citation type="journal article" date="2004" name="Pharmacogenomics">
        <title>Genetic variation in eleven phase I drug metabolism genes in an ethnically diverse population.</title>
        <authorList>
            <person name="Solus J.F."/>
            <person name="Arietta B.J."/>
            <person name="Harris J.R."/>
            <person name="Sexton D.P."/>
            <person name="Steward J.Q."/>
            <person name="McMunn C."/>
            <person name="Ihrie P."/>
            <person name="Mehall J.M."/>
            <person name="Edwards T.L."/>
            <person name="Dawson E.P."/>
        </authorList>
    </citation>
    <scope>VARIANTS THR-74; HIS-144 AND LEU-168</scope>
</reference>
<reference key="24">
    <citation type="journal article" date="2005" name="Drug Metab. Pharmacokinet.">
        <title>Genetic variations and haplotypes of CYP2C19 in a Japanese population.</title>
        <authorList>
            <person name="Fukushima-Uesaka H."/>
            <person name="Saito Y."/>
            <person name="Maekawa K."/>
            <person name="Ozawa S."/>
            <person name="Hasegawa R."/>
            <person name="Kajio H."/>
            <person name="Kuzuya N."/>
            <person name="Yasuda K."/>
            <person name="Kawamoto M."/>
            <person name="Kamatani N."/>
            <person name="Suzuki K."/>
            <person name="Yanagawa T."/>
            <person name="Tohkin M."/>
            <person name="Sawada J."/>
        </authorList>
    </citation>
    <scope>VARIANTS GLY-51; PRO-161 AND HIS-329</scope>
</reference>
<organism>
    <name type="scientific">Homo sapiens</name>
    <name type="common">Human</name>
    <dbReference type="NCBI Taxonomy" id="9606"/>
    <lineage>
        <taxon>Eukaryota</taxon>
        <taxon>Metazoa</taxon>
        <taxon>Chordata</taxon>
        <taxon>Craniata</taxon>
        <taxon>Vertebrata</taxon>
        <taxon>Euteleostomi</taxon>
        <taxon>Mammalia</taxon>
        <taxon>Eutheria</taxon>
        <taxon>Euarchontoglires</taxon>
        <taxon>Primates</taxon>
        <taxon>Haplorrhini</taxon>
        <taxon>Catarrhini</taxon>
        <taxon>Hominidae</taxon>
        <taxon>Homo</taxon>
    </lineage>
</organism>
<dbReference type="EC" id="1.14.14.1" evidence="8"/>
<dbReference type="EC" id="1.14.14.53" evidence="3"/>
<dbReference type="EC" id="1.14.14.51" evidence="3"/>
<dbReference type="EC" id="1.14.14.52" evidence="3"/>
<dbReference type="EC" id="1.14.14.75" evidence="12"/>
<dbReference type="EMBL" id="M61854">
    <property type="protein sequence ID" value="AAB59426.1"/>
    <property type="molecule type" value="mRNA"/>
</dbReference>
<dbReference type="EMBL" id="M61858">
    <property type="protein sequence ID" value="AAA52145.1"/>
    <property type="status" value="ALT_SEQ"/>
    <property type="molecule type" value="mRNA"/>
</dbReference>
<dbReference type="EMBL" id="L07093">
    <property type="protein sequence ID" value="AAA36660.1"/>
    <property type="status" value="ALT_SEQ"/>
    <property type="molecule type" value="mRNA"/>
</dbReference>
<dbReference type="EMBL" id="AY796203">
    <property type="protein sequence ID" value="AAV41877.1"/>
    <property type="molecule type" value="Genomic_DNA"/>
</dbReference>
<dbReference type="EMBL" id="AL583836">
    <property type="status" value="NOT_ANNOTATED_CDS"/>
    <property type="molecule type" value="Genomic_DNA"/>
</dbReference>
<dbReference type="EMBL" id="AL133513">
    <property type="status" value="NOT_ANNOTATED_CDS"/>
    <property type="molecule type" value="Genomic_DNA"/>
</dbReference>
<dbReference type="EMBL" id="L39098">
    <property type="protein sequence ID" value="AAL31347.1"/>
    <property type="molecule type" value="Genomic_DNA"/>
</dbReference>
<dbReference type="EMBL" id="L39097">
    <property type="protein sequence ID" value="AAL31347.1"/>
    <property type="status" value="JOINED"/>
    <property type="molecule type" value="Genomic_DNA"/>
</dbReference>
<dbReference type="EMBL" id="L39102">
    <property type="protein sequence ID" value="AAL31348.1"/>
    <property type="molecule type" value="Genomic_DNA"/>
</dbReference>
<dbReference type="EMBL" id="L39099">
    <property type="protein sequence ID" value="AAL31348.1"/>
    <property type="status" value="JOINED"/>
    <property type="molecule type" value="Genomic_DNA"/>
</dbReference>
<dbReference type="EMBL" id="L39100">
    <property type="protein sequence ID" value="AAL31348.1"/>
    <property type="status" value="JOINED"/>
    <property type="molecule type" value="Genomic_DNA"/>
</dbReference>
<dbReference type="EMBL" id="L39101">
    <property type="protein sequence ID" value="AAL31348.1"/>
    <property type="status" value="JOINED"/>
    <property type="molecule type" value="Genomic_DNA"/>
</dbReference>
<dbReference type="EMBL" id="L31506">
    <property type="status" value="NOT_ANNOTATED_CDS"/>
    <property type="molecule type" value="Genomic_DNA"/>
</dbReference>
<dbReference type="EMBL" id="L31507">
    <property type="status" value="NOT_ANNOTATED_CDS"/>
    <property type="molecule type" value="Genomic_DNA"/>
</dbReference>
<dbReference type="EMBL" id="L32982">
    <property type="status" value="NOT_ANNOTATED_CDS"/>
    <property type="molecule type" value="Genomic_DNA"/>
</dbReference>
<dbReference type="EMBL" id="L32983">
    <property type="status" value="NOT_ANNOTATED_CDS"/>
    <property type="molecule type" value="Genomic_DNA"/>
</dbReference>
<dbReference type="CCDS" id="CCDS7436.1"/>
<dbReference type="PIR" id="F38462">
    <property type="entry name" value="F38462"/>
</dbReference>
<dbReference type="PIR" id="G38462">
    <property type="entry name" value="G38462"/>
</dbReference>
<dbReference type="PIR" id="I52418">
    <property type="entry name" value="I52418"/>
</dbReference>
<dbReference type="RefSeq" id="NP_000760.1">
    <property type="nucleotide sequence ID" value="NM_000769.4"/>
</dbReference>
<dbReference type="PDB" id="4GQS">
    <property type="method" value="X-ray"/>
    <property type="resolution" value="2.87 A"/>
    <property type="chains" value="A/B/C/D=23-489"/>
</dbReference>
<dbReference type="PDBsum" id="4GQS"/>
<dbReference type="SMR" id="P33261"/>
<dbReference type="BioGRID" id="107935">
    <property type="interactions" value="4"/>
</dbReference>
<dbReference type="FunCoup" id="P33261">
    <property type="interactions" value="287"/>
</dbReference>
<dbReference type="IntAct" id="P33261">
    <property type="interactions" value="3"/>
</dbReference>
<dbReference type="STRING" id="9606.ENSP00000360372"/>
<dbReference type="BindingDB" id="P33261"/>
<dbReference type="ChEMBL" id="CHEMBL3622"/>
<dbReference type="DrugBank" id="DB08496">
    <property type="generic name" value="(R)-warfarin"/>
</dbReference>
<dbReference type="DrugBank" id="DB14055">
    <property type="generic name" value="(S)-Warfarin"/>
</dbReference>
<dbReference type="DrugBank" id="DB05812">
    <property type="generic name" value="Abiraterone"/>
</dbReference>
<dbReference type="DrugBank" id="DB14973">
    <property type="generic name" value="Abrocitinib"/>
</dbReference>
<dbReference type="DrugBank" id="DB01418">
    <property type="generic name" value="Acenocoumarol"/>
</dbReference>
<dbReference type="DrugBank" id="DB00945">
    <property type="generic name" value="Acetylsalicylic acid"/>
</dbReference>
<dbReference type="DrugBank" id="DB00546">
    <property type="generic name" value="Adinazolam"/>
</dbReference>
<dbReference type="DrugBank" id="DB00518">
    <property type="generic name" value="Albendazole"/>
</dbReference>
<dbReference type="DrugBank" id="DB00918">
    <property type="generic name" value="Almotriptan"/>
</dbReference>
<dbReference type="DrugBank" id="DB12015">
    <property type="generic name" value="Alpelisib"/>
</dbReference>
<dbReference type="DrugBank" id="DB06403">
    <property type="generic name" value="Ambrisentan"/>
</dbReference>
<dbReference type="DrugBank" id="DB00357">
    <property type="generic name" value="Aminoglutethimide"/>
</dbReference>
<dbReference type="DrugBank" id="DB01424">
    <property type="generic name" value="Aminophenazone"/>
</dbReference>
<dbReference type="DrugBank" id="DB01118">
    <property type="generic name" value="Amiodarone"/>
</dbReference>
<dbReference type="DrugBank" id="DB00321">
    <property type="generic name" value="Amitriptyline"/>
</dbReference>
<dbReference type="DrugBank" id="DB00381">
    <property type="generic name" value="Amlodipine"/>
</dbReference>
<dbReference type="DrugBank" id="DB00701">
    <property type="generic name" value="Amprenavir"/>
</dbReference>
<dbReference type="DrugBank" id="DB01435">
    <property type="generic name" value="Antipyrine"/>
</dbReference>
<dbReference type="DrugBank" id="DB11901">
    <property type="generic name" value="Apalutamide"/>
</dbReference>
<dbReference type="DrugBank" id="DB06605">
    <property type="generic name" value="Apixaban"/>
</dbReference>
<dbReference type="DrugBank" id="DB00673">
    <property type="generic name" value="Aprepitant"/>
</dbReference>
<dbReference type="DrugBank" id="DB15059">
    <property type="generic name" value="Aprocitentan"/>
</dbReference>
<dbReference type="DrugBank" id="DB01274">
    <property type="generic name" value="Arformoterol"/>
</dbReference>
<dbReference type="DrugBank" id="DB06413">
    <property type="generic name" value="Armodafinil"/>
</dbReference>
<dbReference type="DrugBank" id="DB06697">
    <property type="generic name" value="Artemether"/>
</dbReference>
<dbReference type="DrugBank" id="DB11638">
    <property type="generic name" value="Artenimol"/>
</dbReference>
<dbReference type="DrugBank" id="DB12597">
    <property type="generic name" value="Asciminib"/>
</dbReference>
<dbReference type="DrugBank" id="DB11586">
    <property type="generic name" value="Asunaprevir"/>
</dbReference>
<dbReference type="DrugBank" id="DB00289">
    <property type="generic name" value="Atomoxetine"/>
</dbReference>
<dbReference type="DrugBank" id="DB01076">
    <property type="generic name" value="Atorvastatin"/>
</dbReference>
<dbReference type="DrugBank" id="DB06442">
    <property type="generic name" value="Avasimibe"/>
</dbReference>
<dbReference type="DrugBank" id="DB06626">
    <property type="generic name" value="Axitinib"/>
</dbReference>
<dbReference type="DrugBank" id="DB00972">
    <property type="generic name" value="Azelastine"/>
</dbReference>
<dbReference type="DrugBank" id="DB01483">
    <property type="generic name" value="Barbital"/>
</dbReference>
<dbReference type="DrugBank" id="DB16703">
    <property type="generic name" value="Belumosudil"/>
</dbReference>
<dbReference type="DrugBank" id="DB15463">
    <property type="generic name" value="Belzutifan"/>
</dbReference>
<dbReference type="DrugBank" id="DB12319">
    <property type="generic name" value="Benzbromarone"/>
</dbReference>
<dbReference type="DrugBank" id="DB01086">
    <property type="generic name" value="Benzocaine"/>
</dbReference>
<dbReference type="DrugBank" id="DB00443">
    <property type="generic name" value="Betamethasone"/>
</dbReference>
<dbReference type="DrugBank" id="DB01128">
    <property type="generic name" value="Bicalutamide"/>
</dbReference>
<dbReference type="DrugBank" id="DB11967">
    <property type="generic name" value="Binimetinib"/>
</dbReference>
<dbReference type="DrugBank" id="DB13746">
    <property type="generic name" value="Bioallethrin"/>
</dbReference>
<dbReference type="DrugBank" id="DB00188">
    <property type="generic name" value="Bortezomib"/>
</dbReference>
<dbReference type="DrugBank" id="DB12151">
    <property type="generic name" value="Brincidofovir"/>
</dbReference>
<dbReference type="DrugBank" id="DB05541">
    <property type="generic name" value="Brivaracetam"/>
</dbReference>
<dbReference type="DrugBank" id="DB01558">
    <property type="generic name" value="Bromazepam"/>
</dbReference>
<dbReference type="DrugBank" id="DB01222">
    <property type="generic name" value="Budesonide"/>
</dbReference>
<dbReference type="DrugBank" id="DB00297">
    <property type="generic name" value="Bupivacaine"/>
</dbReference>
<dbReference type="DrugBank" id="DB00921">
    <property type="generic name" value="Buprenorphine"/>
</dbReference>
<dbReference type="DrugBank" id="DB09061">
    <property type="generic name" value="Cannabidiol"/>
</dbReference>
<dbReference type="DrugBank" id="DB14737">
    <property type="generic name" value="Cannabinol"/>
</dbReference>
<dbReference type="DrugBank" id="DB08502">
    <property type="generic name" value="Capravirine"/>
</dbReference>
<dbReference type="DrugBank" id="DB00564">
    <property type="generic name" value="Carbamazepine"/>
</dbReference>
<dbReference type="DrugBank" id="DB06016">
    <property type="generic name" value="Cariprazine"/>
</dbReference>
<dbReference type="DrugBank" id="DB00395">
    <property type="generic name" value="Carisoprodol"/>
</dbReference>
<dbReference type="DrugBank" id="DB14984">
    <property type="generic name" value="Casimersen"/>
</dbReference>
<dbReference type="DrugBank" id="DB06119">
    <property type="generic name" value="Cenobamate"/>
</dbReference>
<dbReference type="DrugBank" id="DB00446">
    <property type="generic name" value="Chloramphenicol"/>
</dbReference>
<dbReference type="DrugBank" id="DB00672">
    <property type="generic name" value="Chlorpropamide"/>
</dbReference>
<dbReference type="DrugBank" id="DB01166">
    <property type="generic name" value="Cilostazol"/>
</dbReference>
<dbReference type="DrugBank" id="DB00501">
    <property type="generic name" value="Cimetidine"/>
</dbReference>
<dbReference type="DrugBank" id="DB00604">
    <property type="generic name" value="Cisapride"/>
</dbReference>
<dbReference type="DrugBank" id="DB00215">
    <property type="generic name" value="Citalopram"/>
</dbReference>
<dbReference type="DrugBank" id="DB12499">
    <property type="generic name" value="Clascoterone"/>
</dbReference>
<dbReference type="DrugBank" id="DB04920">
    <property type="generic name" value="Clevidipine"/>
</dbReference>
<dbReference type="DrugBank" id="DB14025">
    <property type="generic name" value="Clinafloxacin"/>
</dbReference>
<dbReference type="DrugBank" id="DB00349">
    <property type="generic name" value="Clobazam"/>
</dbReference>
<dbReference type="DrugBank" id="DB06470">
    <property type="generic name" value="Clomethiazole"/>
</dbReference>
<dbReference type="DrugBank" id="DB01242">
    <property type="generic name" value="Clomipramine"/>
</dbReference>
<dbReference type="DrugBank" id="DB00758">
    <property type="generic name" value="Clopidogrel"/>
</dbReference>
<dbReference type="DrugBank" id="DB01559">
    <property type="generic name" value="Clotiazepam"/>
</dbReference>
<dbReference type="DrugBank" id="DB00363">
    <property type="generic name" value="Clozapine"/>
</dbReference>
<dbReference type="DrugBank" id="DB14635">
    <property type="generic name" value="Curcumin sulfate"/>
</dbReference>
<dbReference type="DrugBank" id="DB00531">
    <property type="generic name" value="Cyclophosphamide"/>
</dbReference>
<dbReference type="DrugBank" id="DB00091">
    <property type="generic name" value="Cyclosporine"/>
</dbReference>
<dbReference type="DrugBank" id="DB08912">
    <property type="generic name" value="Dabrafenib"/>
</dbReference>
<dbReference type="DrugBank" id="DB00250">
    <property type="generic name" value="Dapsone"/>
</dbReference>
<dbReference type="DrugBank" id="DB00705">
    <property type="generic name" value="Delavirdine"/>
</dbReference>
<dbReference type="DrugBank" id="DB06700">
    <property type="generic name" value="Desvenlafaxine"/>
</dbReference>
<dbReference type="DrugBank" id="DB01234">
    <property type="generic name" value="Dexamethasone"/>
</dbReference>
<dbReference type="DrugBank" id="DB14649">
    <property type="generic name" value="Dexamethasone acetate"/>
</dbReference>
<dbReference type="DrugBank" id="DB09213">
    <property type="generic name" value="Dexibuprofen"/>
</dbReference>
<dbReference type="DrugBank" id="DB05351">
    <property type="generic name" value="Dexlansoprazole"/>
</dbReference>
<dbReference type="DrugBank" id="DB13762">
    <property type="generic name" value="Dexrabeprazole"/>
</dbReference>
<dbReference type="DrugBank" id="DB00514">
    <property type="generic name" value="Dextromethorphan"/>
</dbReference>
<dbReference type="DrugBank" id="DB00829">
    <property type="generic name" value="Diazepam"/>
</dbReference>
<dbReference type="DrugBank" id="DB00586">
    <property type="generic name" value="Diclofenac"/>
</dbReference>
<dbReference type="DrugBank" id="DB00343">
    <property type="generic name" value="Diltiazem"/>
</dbReference>
<dbReference type="DrugBank" id="DB01093">
    <property type="generic name" value="Dimethyl sulfoxide"/>
</dbReference>
<dbReference type="DrugBank" id="DB01075">
    <property type="generic name" value="Diphenhydramine"/>
</dbReference>
<dbReference type="DrugBank" id="DB09167">
    <property type="generic name" value="Dosulepin"/>
</dbReference>
<dbReference type="DrugBank" id="DB05928">
    <property type="generic name" value="Dovitinib"/>
</dbReference>
<dbReference type="DrugBank" id="DB00590">
    <property type="generic name" value="Doxazosin"/>
</dbReference>
<dbReference type="DrugBank" id="DB01142">
    <property type="generic name" value="Doxepin"/>
</dbReference>
<dbReference type="DrugBank" id="DB00470">
    <property type="generic name" value="Dronabinol"/>
</dbReference>
<dbReference type="DrugBank" id="DB00476">
    <property type="generic name" value="Duloxetine"/>
</dbReference>
<dbReference type="DrugBank" id="DB00625">
    <property type="generic name" value="Efavirenz"/>
</dbReference>
<dbReference type="DrugBank" id="DB00216">
    <property type="generic name" value="Eletriptan"/>
</dbReference>
<dbReference type="DrugBank" id="DB15444">
    <property type="generic name" value="Elexacaftor"/>
</dbReference>
<dbReference type="DrugBank" id="DB13874">
    <property type="generic name" value="Enasidenib"/>
</dbReference>
<dbReference type="DrugBank" id="DB11718">
    <property type="generic name" value="Encorafenib"/>
</dbReference>
<dbReference type="DrugBank" id="DB00109">
    <property type="generic name" value="Enfuvirtide"/>
</dbReference>
<dbReference type="DrugBank" id="DB08899">
    <property type="generic name" value="Enzalutamide"/>
</dbReference>
<dbReference type="DrugBank" id="DB01175">
    <property type="generic name" value="Escitalopram"/>
</dbReference>
<dbReference type="DrugBank" id="DB11823">
    <property type="generic name" value="Esketamine"/>
</dbReference>
<dbReference type="DrugBank" id="DB14575">
    <property type="generic name" value="Eslicarbazepine"/>
</dbReference>
<dbReference type="DrugBank" id="DB09119">
    <property type="generic name" value="Eslicarbazepine acetate"/>
</dbReference>
<dbReference type="DrugBank" id="DB00736">
    <property type="generic name" value="Esomeprazole"/>
</dbReference>
<dbReference type="DrugBank" id="DB00783">
    <property type="generic name" value="Estradiol"/>
</dbReference>
<dbReference type="DrugBank" id="DB13952">
    <property type="generic name" value="Estradiol acetate"/>
</dbReference>
<dbReference type="DrugBank" id="DB13953">
    <property type="generic name" value="Estradiol benzoate"/>
</dbReference>
<dbReference type="DrugBank" id="DB13954">
    <property type="generic name" value="Estradiol cypionate"/>
</dbReference>
<dbReference type="DrugBank" id="DB13955">
    <property type="generic name" value="Estradiol dienanthate"/>
</dbReference>
<dbReference type="DrugBank" id="DB13956">
    <property type="generic name" value="Estradiol valerate"/>
</dbReference>
<dbReference type="DrugBank" id="DB00330">
    <property type="generic name" value="Ethambutol"/>
</dbReference>
<dbReference type="DrugBank" id="DB00898">
    <property type="generic name" value="Ethanol"/>
</dbReference>
<dbReference type="DrugBank" id="DB00977">
    <property type="generic name" value="Ethinylestradiol"/>
</dbReference>
<dbReference type="DrugBank" id="DB09166">
    <property type="generic name" value="Etizolam"/>
</dbReference>
<dbReference type="DrugBank" id="DB01628">
    <property type="generic name" value="Etoricoxib"/>
</dbReference>
<dbReference type="DrugBank" id="DB14766">
    <property type="generic name" value="Etrasimod"/>
</dbReference>
<dbReference type="DrugBank" id="DB06414">
    <property type="generic name" value="Etravirine"/>
</dbReference>
<dbReference type="DrugBank" id="DB12500">
    <property type="generic name" value="Fedratinib"/>
</dbReference>
<dbReference type="DrugBank" id="DB00949">
    <property type="generic name" value="Felbamate"/>
</dbReference>
<dbReference type="DrugBank" id="DB00574">
    <property type="generic name" value="Fenfluramine"/>
</dbReference>
<dbReference type="DrugBank" id="DB01039">
    <property type="generic name" value="Fenofibrate"/>
</dbReference>
<dbReference type="DrugBank" id="DB12265">
    <property type="generic name" value="Fexinidazole"/>
</dbReference>
<dbReference type="DrugBank" id="DB15669">
    <property type="generic name" value="Fezolinetant"/>
</dbReference>
<dbReference type="DrugBank" id="DB00196">
    <property type="generic name" value="Fluconazole"/>
</dbReference>
<dbReference type="DrugBank" id="DB01544">
    <property type="generic name" value="Flunitrazepam"/>
</dbReference>
<dbReference type="DrugBank" id="DB00472">
    <property type="generic name" value="Fluoxetine"/>
</dbReference>
<dbReference type="DrugBank" id="DB01095">
    <property type="generic name" value="Fluvastatin"/>
</dbReference>
<dbReference type="DrugBank" id="DB00176">
    <property type="generic name" value="Fluvoxamine"/>
</dbReference>
<dbReference type="DrugBank" id="DB00983">
    <property type="generic name" value="Formoterol"/>
</dbReference>
<dbReference type="DrugBank" id="DB01320">
    <property type="generic name" value="Fosphenytoin"/>
</dbReference>
<dbReference type="DrugBank" id="DB11679">
    <property type="generic name" value="Fruquintinib"/>
</dbReference>
<dbReference type="DrugBank" id="DB05087">
    <property type="generic name" value="Ganaxolone"/>
</dbReference>
<dbReference type="DrugBank" id="DB00317">
    <property type="generic name" value="Gefitinib"/>
</dbReference>
<dbReference type="DrugBank" id="DB01241">
    <property type="generic name" value="Gemfibrozil"/>
</dbReference>
<dbReference type="DrugBank" id="DB06730">
    <property type="generic name" value="Gestodene"/>
</dbReference>
<dbReference type="DrugBank" id="DB01120">
    <property type="generic name" value="Gliclazide"/>
</dbReference>
<dbReference type="DrugBank" id="DB01016">
    <property type="generic name" value="Glyburide"/>
</dbReference>
<dbReference type="DrugBank" id="DB00986">
    <property type="generic name" value="Glycopyrronium"/>
</dbReference>
<dbReference type="DrugBank" id="DB01018">
    <property type="generic name" value="Guanfacine"/>
</dbReference>
<dbReference type="DrugBank" id="DB00502">
    <property type="generic name" value="Haloperidol"/>
</dbReference>
<dbReference type="DrugBank" id="DB01355">
    <property type="generic name" value="Hexobarbital"/>
</dbReference>
<dbReference type="DrugBank" id="DB00956">
    <property type="generic name" value="Hydrocodone"/>
</dbReference>
<dbReference type="DrugBank" id="DB00741">
    <property type="generic name" value="Hydrocortisone"/>
</dbReference>
<dbReference type="DrugBank" id="DB06789">
    <property type="generic name" value="Hydroxyprogesterone caproate"/>
</dbReference>
<dbReference type="DrugBank" id="DB01050">
    <property type="generic name" value="Ibuprofen"/>
</dbReference>
<dbReference type="DrugBank" id="DB09054">
    <property type="generic name" value="Idelalisib"/>
</dbReference>
<dbReference type="DrugBank" id="DB01181">
    <property type="generic name" value="Ifosfamide"/>
</dbReference>
<dbReference type="DrugBank" id="DB00619">
    <property type="generic name" value="Imatinib"/>
</dbReference>
<dbReference type="DrugBank" id="DB00458">
    <property type="generic name" value="Imipramine"/>
</dbReference>
<dbReference type="DrugBank" id="DB00328">
    <property type="generic name" value="Indomethacin"/>
</dbReference>
<dbReference type="DrugBank" id="DB11633">
    <property type="generic name" value="Isavuconazole"/>
</dbReference>
<dbReference type="DrugBank" id="DB06636">
    <property type="generic name" value="Isavuconazonium"/>
</dbReference>
<dbReference type="DrugBank" id="DB00951">
    <property type="generic name" value="Isoniazid"/>
</dbReference>
<dbReference type="DrugBank" id="DB09570">
    <property type="generic name" value="Ixazomib"/>
</dbReference>
<dbReference type="DrugBank" id="DB06738">
    <property type="generic name" value="Ketobemidone"/>
</dbReference>
<dbReference type="DrugBank" id="DB01026">
    <property type="generic name" value="Ketoconazole"/>
</dbReference>
<dbReference type="DrugBank" id="DB00598">
    <property type="generic name" value="Labetalol"/>
</dbReference>
<dbReference type="DrugBank" id="DB06218">
    <property type="generic name" value="Lacosamide"/>
</dbReference>
<dbReference type="DrugBank" id="DB00448">
    <property type="generic name" value="Lansoprazole"/>
</dbReference>
<dbReference type="DrugBank" id="DB01259">
    <property type="generic name" value="Lapatinib"/>
</dbReference>
<dbReference type="DrugBank" id="DB09078">
    <property type="generic name" value="Lenvatinib"/>
</dbReference>
<dbReference type="DrugBank" id="DB12070">
    <property type="generic name" value="Letermovir"/>
</dbReference>
<dbReference type="DrugBank" id="DB01006">
    <property type="generic name" value="Letrozole"/>
</dbReference>
<dbReference type="DrugBank" id="DB08918">
    <property type="generic name" value="Levomilnacipran"/>
</dbReference>
<dbReference type="DrugBank" id="DB09198">
    <property type="generic name" value="Lobeglitazone"/>
</dbReference>
<dbReference type="DrugBank" id="DB04948">
    <property type="generic name" value="Lofexidine"/>
</dbReference>
<dbReference type="DrugBank" id="DB06448">
    <property type="generic name" value="Lonafarnib"/>
</dbReference>
<dbReference type="DrugBank" id="DB16220">
    <property type="generic name" value="Lonapegsomatropin"/>
</dbReference>
<dbReference type="DrugBank" id="DB01601">
    <property type="generic name" value="Lopinavir"/>
</dbReference>
<dbReference type="DrugBank" id="DB00455">
    <property type="generic name" value="Loratadine"/>
</dbReference>
<dbReference type="DrugBank" id="DB04871">
    <property type="generic name" value="Lorcaserin"/>
</dbReference>
<dbReference type="DrugBank" id="DB12130">
    <property type="generic name" value="Lorlatinib"/>
</dbReference>
<dbReference type="DrugBank" id="DB00678">
    <property type="generic name" value="Losartan"/>
</dbReference>
<dbReference type="DrugBank" id="DB00227">
    <property type="generic name" value="Lovastatin"/>
</dbReference>
<dbReference type="DrugBank" id="DB08933">
    <property type="generic name" value="Luliconazole"/>
</dbReference>
<dbReference type="DrugBank" id="DB09280">
    <property type="generic name" value="Lumacaftor"/>
</dbReference>
<dbReference type="DrugBank" id="DB01283">
    <property type="generic name" value="Lumiracoxib"/>
</dbReference>
<dbReference type="DrugBank" id="DB12474">
    <property type="generic name" value="Lynestrenol"/>
</dbReference>
<dbReference type="DrugBank" id="DB08932">
    <property type="generic name" value="Macitentan"/>
</dbReference>
<dbReference type="DrugBank" id="DB09238">
    <property type="generic name" value="Manidipine"/>
</dbReference>
<dbReference type="DrugBank" id="DB14921">
    <property type="generic name" value="Mavacamten"/>
</dbReference>
<dbReference type="DrugBank" id="DB05501">
    <property type="generic name" value="Mavorixafor"/>
</dbReference>
<dbReference type="DrugBank" id="DB14009">
    <property type="generic name" value="Medical Cannabis"/>
</dbReference>
<dbReference type="DrugBank" id="DB01065">
    <property type="generic name" value="Melatonin"/>
</dbReference>
<dbReference type="DrugBank" id="DB01043">
    <property type="generic name" value="Memantine"/>
</dbReference>
<dbReference type="DrugBank" id="DB00170">
    <property type="generic name" value="Menadione"/>
</dbReference>
<dbReference type="DrugBank" id="DB00454">
    <property type="generic name" value="Meperidine"/>
</dbReference>
<dbReference type="DrugBank" id="DB00532">
    <property type="generic name" value="Mephenytoin"/>
</dbReference>
<dbReference type="DrugBank" id="DB00333">
    <property type="generic name" value="Methadone"/>
</dbReference>
<dbReference type="DrugBank" id="DB00763">
    <property type="generic name" value="Methimazole"/>
</dbReference>
<dbReference type="DrugBank" id="DB05246">
    <property type="generic name" value="Methsuximide"/>
</dbReference>
<dbReference type="DrugBank" id="DB09241">
    <property type="generic name" value="Methylene blue"/>
</dbReference>
<dbReference type="DrugBank" id="DB00849">
    <property type="generic name" value="Methylphenobarbital"/>
</dbReference>
<dbReference type="DrugBank" id="DB00959">
    <property type="generic name" value="Methylprednisolone"/>
</dbReference>
<dbReference type="DrugBank" id="DB01110">
    <property type="generic name" value="Miconazole"/>
</dbReference>
<dbReference type="DrugBank" id="DB06595">
    <property type="generic name" value="Midostaurin"/>
</dbReference>
<dbReference type="DrugBank" id="DB16236">
    <property type="generic name" value="Mitapivat"/>
</dbReference>
<dbReference type="DrugBank" id="DB01171">
    <property type="generic name" value="Moclobemide"/>
</dbReference>
<dbReference type="DrugBank" id="DB00745">
    <property type="generic name" value="Modafinil"/>
</dbReference>
<dbReference type="DrugBank" id="DB11763">
    <property type="generic name" value="Momelotinib"/>
</dbReference>
<dbReference type="DrugBank" id="DB14011">
    <property type="generic name" value="Nabiximols"/>
</dbReference>
<dbReference type="DrugBank" id="DB09049">
    <property type="generic name" value="Naloxegol"/>
</dbReference>
<dbReference type="DrugBank" id="DB01183">
    <property type="generic name" value="Naloxone"/>
</dbReference>
<dbReference type="DrugBank" id="DB04861">
    <property type="generic name" value="Nebivolol"/>
</dbReference>
<dbReference type="DrugBank" id="DB00220">
    <property type="generic name" value="Nelfinavir"/>
</dbReference>
<dbReference type="DrugBank" id="DB00622">
    <property type="generic name" value="Nicardipine"/>
</dbReference>
<dbReference type="DrugBank" id="DB00184">
    <property type="generic name" value="Nicotine"/>
</dbReference>
<dbReference type="DrugBank" id="DB00665">
    <property type="generic name" value="Nilutamide"/>
</dbReference>
<dbReference type="DrugBank" id="DB06712">
    <property type="generic name" value="Nilvadipine"/>
</dbReference>
<dbReference type="DrugBank" id="DB12005">
    <property type="generic name" value="Nirogacestat"/>
</dbReference>
<dbReference type="DrugBank" id="DB00717">
    <property type="generic name" value="Norethisterone"/>
</dbReference>
<dbReference type="DrugBank" id="DB00540">
    <property type="generic name" value="Nortriptyline"/>
</dbReference>
<dbReference type="DrugBank" id="DB00334">
    <property type="generic name" value="Olanzapine"/>
</dbReference>
<dbReference type="DrugBank" id="DB14881">
    <property type="generic name" value="Oliceridine"/>
</dbReference>
<dbReference type="DrugBank" id="DB16267">
    <property type="generic name" value="Olutasidenib"/>
</dbReference>
<dbReference type="DrugBank" id="DB00338">
    <property type="generic name" value="Omeprazole"/>
</dbReference>
<dbReference type="DrugBank" id="DB11632">
    <property type="generic name" value="Opicapone"/>
</dbReference>
<dbReference type="DrugBank" id="DB04911">
    <property type="generic name" value="Oritavancin"/>
</dbReference>
<dbReference type="DrugBank" id="DB11837">
    <property type="generic name" value="Osilodrostat"/>
</dbReference>
<dbReference type="DrugBank" id="DB04938">
    <property type="generic name" value="Ospemifene"/>
</dbReference>
<dbReference type="DrugBank" id="DB00776">
    <property type="generic name" value="Oxcarbazepine"/>
</dbReference>
<dbReference type="DrugBank" id="DB00239">
    <property type="generic name" value="Oxiconazole"/>
</dbReference>
<dbReference type="DrugBank" id="DB00935">
    <property type="generic name" value="Oxymetazoline"/>
</dbReference>
<dbReference type="DrugBank" id="DB11697">
    <property type="generic name" value="Pacritinib"/>
</dbReference>
<dbReference type="DrugBank" id="DB05467">
    <property type="generic name" value="Palovarotene"/>
</dbReference>
<dbReference type="DrugBank" id="DB00213">
    <property type="generic name" value="Pantoprazole"/>
</dbReference>
<dbReference type="DrugBank" id="DB00715">
    <property type="generic name" value="Paroxetine"/>
</dbReference>
<dbReference type="DrugBank" id="DB00738">
    <property type="generic name" value="Pentamidine"/>
</dbReference>
<dbReference type="DrugBank" id="DB00312">
    <property type="generic name" value="Pentobarbital"/>
</dbReference>
<dbReference type="DrugBank" id="DB00850">
    <property type="generic name" value="Perphenazine"/>
</dbReference>
<dbReference type="DrugBank" id="DB03783">
    <property type="generic name" value="Phenacetin"/>
</dbReference>
<dbReference type="DrugBank" id="DB00780">
    <property type="generic name" value="Phenelzine"/>
</dbReference>
<dbReference type="DrugBank" id="DB01174">
    <property type="generic name" value="Phenobarbital"/>
</dbReference>
<dbReference type="DrugBank" id="DB00252">
    <property type="generic name" value="Phenytoin"/>
</dbReference>
<dbReference type="DrugBank" id="DB13941">
    <property type="generic name" value="Piperaquine"/>
</dbReference>
<dbReference type="DrugBank" id="DB01621">
    <property type="generic name" value="Pipotiazine"/>
</dbReference>
<dbReference type="DrugBank" id="DB04951">
    <property type="generic name" value="Pirfenidone"/>
</dbReference>
<dbReference type="DrugBank" id="DB17472">
    <property type="generic name" value="Pirtobrutinib"/>
</dbReference>
<dbReference type="DrugBank" id="DB06209">
    <property type="generic name" value="Prasugrel"/>
</dbReference>
<dbReference type="DrugBank" id="DB01058">
    <property type="generic name" value="Praziquantel"/>
</dbReference>
<dbReference type="DrugBank" id="DB14631">
    <property type="generic name" value="Prednisolone phosphate"/>
</dbReference>
<dbReference type="DrugBank" id="DB00635">
    <property type="generic name" value="Prednisone"/>
</dbReference>
<dbReference type="DrugBank" id="DB00794">
    <property type="generic name" value="Primidone"/>
</dbReference>
<dbReference type="DrugBank" id="DB00396">
    <property type="generic name" value="Progesterone"/>
</dbReference>
<dbReference type="DrugBank" id="DB01131">
    <property type="generic name" value="Proguanil"/>
</dbReference>
<dbReference type="DrugBank" id="DB00420">
    <property type="generic name" value="Promazine"/>
</dbReference>
<dbReference type="DrugBank" id="DB00818">
    <property type="generic name" value="Propofol"/>
</dbReference>
<dbReference type="DrugBank" id="DB00571">
    <property type="generic name" value="Propranolol"/>
</dbReference>
<dbReference type="DrugBank" id="DB01589">
    <property type="generic name" value="Quazepam"/>
</dbReference>
<dbReference type="DrugBank" id="DB04216">
    <property type="generic name" value="Quercetin"/>
</dbReference>
<dbReference type="DrugBank" id="DB01224">
    <property type="generic name" value="Quetiapine"/>
</dbReference>
<dbReference type="DrugBank" id="DB00468">
    <property type="generic name" value="Quinine"/>
</dbReference>
<dbReference type="DrugBank" id="DB01129">
    <property type="generic name" value="Rabeprazole"/>
</dbReference>
<dbReference type="DrugBank" id="DB00980">
    <property type="generic name" value="Ramelteon"/>
</dbReference>
<dbReference type="DrugBank" id="DB08896">
    <property type="generic name" value="Regorafenib"/>
</dbReference>
<dbReference type="DrugBank" id="DB16826">
    <property type="generic name" value="Repotrectinib"/>
</dbReference>
<dbReference type="DrugBank" id="DB02709">
    <property type="generic name" value="Resveratrol"/>
</dbReference>
<dbReference type="DrugBank" id="DB00615">
    <property type="generic name" value="Rifabutin"/>
</dbReference>
<dbReference type="DrugBank" id="DB01045">
    <property type="generic name" value="Rifampin"/>
</dbReference>
<dbReference type="DrugBank" id="DB11753">
    <property type="generic name" value="Rifamycin"/>
</dbReference>
<dbReference type="DrugBank" id="DB01201">
    <property type="generic name" value="Rifapentine"/>
</dbReference>
<dbReference type="DrugBank" id="DB01220">
    <property type="generic name" value="Rifaximin"/>
</dbReference>
<dbReference type="DrugBank" id="DB08864">
    <property type="generic name" value="Rilpivirine"/>
</dbReference>
<dbReference type="DrugBank" id="DB00503">
    <property type="generic name" value="Ritonavir"/>
</dbReference>
<dbReference type="DrugBank" id="DB06176">
    <property type="generic name" value="Romidepsin"/>
</dbReference>
<dbReference type="DrugBank" id="DB05271">
    <property type="generic name" value="Rotigotine"/>
</dbReference>
<dbReference type="DrugBank" id="DB12332">
    <property type="generic name" value="Rucaparib"/>
</dbReference>
<dbReference type="DrugBank" id="DB11614">
    <property type="generic name" value="Rupatadine"/>
</dbReference>
<dbReference type="DrugBank" id="DB06654">
    <property type="generic name" value="Safinamide"/>
</dbReference>
<dbReference type="DrugBank" id="DB12543">
    <property type="generic name" value="Samidorphan"/>
</dbReference>
<dbReference type="DrugBank" id="DB12834">
    <property type="generic name" value="Secnidazole"/>
</dbReference>
<dbReference type="DrugBank" id="DB00418">
    <property type="generic name" value="Secobarbital"/>
</dbReference>
<dbReference type="DrugBank" id="DB01037">
    <property type="generic name" value="Selegiline"/>
</dbReference>
<dbReference type="DrugBank" id="DB11689">
    <property type="generic name" value="Selumetinib"/>
</dbReference>
<dbReference type="DrugBank" id="DB06731">
    <property type="generic name" value="Seproxetine"/>
</dbReference>
<dbReference type="DrugBank" id="DB06739">
    <property type="generic name" value="Seratrodast"/>
</dbReference>
<dbReference type="DrugBank" id="DB01104">
    <property type="generic name" value="Sertraline"/>
</dbReference>
<dbReference type="DrugBank" id="DB00203">
    <property type="generic name" value="Sildenafil"/>
</dbReference>
<dbReference type="DrugBank" id="DB00641">
    <property type="generic name" value="Simvastatin"/>
</dbReference>
<dbReference type="DrugBank" id="DB06268">
    <property type="generic name" value="Sitaxentan"/>
</dbReference>
<dbReference type="DrugBank" id="DB15093">
    <property type="generic name" value="Somapacitan"/>
</dbReference>
<dbReference type="DrugBank" id="DB00052">
    <property type="generic name" value="Somatotropin"/>
</dbReference>
<dbReference type="DrugBank" id="DB00398">
    <property type="generic name" value="Sorafenib"/>
</dbReference>
<dbReference type="DrugBank" id="DB12548">
    <property type="generic name" value="Sparsentan"/>
</dbReference>
<dbReference type="DrugBank" id="DB01323">
    <property type="generic name" value="St. John's Wort"/>
</dbReference>
<dbReference type="DrugBank" id="DB09118">
    <property type="generic name" value="Stiripentol"/>
</dbReference>
<dbReference type="DrugBank" id="DB00675">
    <property type="generic name" value="Tamoxifen"/>
</dbReference>
<dbReference type="DrugBank" id="DB06204">
    <property type="generic name" value="Tapentadol"/>
</dbReference>
<dbReference type="DrugBank" id="DB06083">
    <property type="generic name" value="Tapinarof"/>
</dbReference>
<dbReference type="DrugBank" id="DB12020">
    <property type="generic name" value="Tecovirimat"/>
</dbReference>
<dbReference type="DrugBank" id="DB00966">
    <property type="generic name" value="Telmisartan"/>
</dbReference>
<dbReference type="DrugBank" id="DB12095">
    <property type="generic name" value="Telotristat ethyl"/>
</dbReference>
<dbReference type="DrugBank" id="DB00444">
    <property type="generic name" value="Teniposide"/>
</dbReference>
<dbReference type="DrugBank" id="DB00857">
    <property type="generic name" value="Terbinafine"/>
</dbReference>
<dbReference type="DrugBank" id="DB00624">
    <property type="generic name" value="Testosterone"/>
</dbReference>
<dbReference type="DrugBank" id="DB13943">
    <property type="generic name" value="Testosterone cypionate"/>
</dbReference>
<dbReference type="DrugBank" id="DB13944">
    <property type="generic name" value="Testosterone enanthate"/>
</dbReference>
<dbReference type="DrugBank" id="DB13946">
    <property type="generic name" value="Testosterone undecanoate"/>
</dbReference>
<dbReference type="DrugBank" id="DB11712">
    <property type="generic name" value="Tezacaftor"/>
</dbReference>
<dbReference type="DrugBank" id="DB01041">
    <property type="generic name" value="Thalidomide"/>
</dbReference>
<dbReference type="DrugBank" id="DB00599">
    <property type="generic name" value="Thiopental"/>
</dbReference>
<dbReference type="DrugBank" id="DB00679">
    <property type="generic name" value="Thioridazine"/>
</dbReference>
<dbReference type="DrugBank" id="DB00208">
    <property type="generic name" value="Ticlopidine"/>
</dbReference>
<dbReference type="DrugBank" id="DB00373">
    <property type="generic name" value="Timolol"/>
</dbReference>
<dbReference type="DrugBank" id="DB01007">
    <property type="generic name" value="Tioconazole"/>
</dbReference>
<dbReference type="DrugBank" id="DB00932">
    <property type="generic name" value="Tipranavir"/>
</dbReference>
<dbReference type="DrugBank" id="DB06137">
    <property type="generic name" value="Tirbanibulin"/>
</dbReference>
<dbReference type="DrugBank" id="DB08895">
    <property type="generic name" value="Tofacitinib"/>
</dbReference>
<dbReference type="DrugBank" id="DB01124">
    <property type="generic name" value="Tolbutamide"/>
</dbReference>
<dbReference type="DrugBank" id="DB01036">
    <property type="generic name" value="Tolterodine"/>
</dbReference>
<dbReference type="DrugBank" id="DB00273">
    <property type="generic name" value="Topiramate"/>
</dbReference>
<dbReference type="DrugBank" id="DB01685">
    <property type="generic name" value="Topiroxostat"/>
</dbReference>
<dbReference type="DrugBank" id="DB15266">
    <property type="generic name" value="Tovorafenib"/>
</dbReference>
<dbReference type="DrugBank" id="DB05109">
    <property type="generic name" value="Trabectedin"/>
</dbReference>
<dbReference type="DrugBank" id="DB00752">
    <property type="generic name" value="Tranylcypromine"/>
</dbReference>
<dbReference type="DrugBank" id="DB12245">
    <property type="generic name" value="Triclabendazole"/>
</dbReference>
<dbReference type="DrugBank" id="DB00347">
    <property type="generic name" value="Trimethadione"/>
</dbReference>
<dbReference type="DrugBank" id="DB00726">
    <property type="generic name" value="Trimipramine"/>
</dbReference>
<dbReference type="DrugBank" id="DB00197">
    <property type="generic name" value="Troglitazone"/>
</dbReference>
<dbReference type="DrugBank" id="DB15328">
    <property type="generic name" value="Ubrogepant"/>
</dbReference>
<dbReference type="DrugBank" id="DB00313">
    <property type="generic name" value="Valproic acid"/>
</dbReference>
<dbReference type="DrugBank" id="DB00862">
    <property type="generic name" value="Vardenafil"/>
</dbReference>
<dbReference type="DrugBank" id="DB00285">
    <property type="generic name" value="Venlafaxine"/>
</dbReference>
<dbReference type="DrugBank" id="DB00661">
    <property type="generic name" value="Verapamil"/>
</dbReference>
<dbReference type="DrugBank" id="DB16349">
    <property type="generic name" value="Vicagrel"/>
</dbReference>
<dbReference type="DrugBank" id="DB06684">
    <property type="generic name" value="Vilazodone"/>
</dbReference>
<dbReference type="DrugBank" id="DB08828">
    <property type="generic name" value="Vismodegib"/>
</dbReference>
<dbReference type="DrugBank" id="DB11739">
    <property type="generic name" value="Vonoprazan"/>
</dbReference>
<dbReference type="DrugBank" id="DB17097">
    <property type="generic name" value="Vorasidenib"/>
</dbReference>
<dbReference type="DrugBank" id="DB00582">
    <property type="generic name" value="Voriconazole"/>
</dbReference>
<dbReference type="DrugBank" id="DB09068">
    <property type="generic name" value="Vortioxetine"/>
</dbReference>
<dbReference type="DrugBank" id="DB14975">
    <property type="generic name" value="Voxelotor"/>
</dbReference>
<dbReference type="DrugBank" id="DB00682">
    <property type="generic name" value="Warfarin"/>
</dbReference>
<dbReference type="DrugBank" id="DB15357">
    <property type="generic name" value="Xanomeline"/>
</dbReference>
<dbReference type="DrugBank" id="DB00549">
    <property type="generic name" value="Zafirlukast"/>
</dbReference>
<dbReference type="DrugBank" id="DB00425">
    <property type="generic name" value="Zolpidem"/>
</dbReference>
<dbReference type="DrugBank" id="DB00909">
    <property type="generic name" value="Zonisamide"/>
</dbReference>
<dbReference type="DrugBank" id="DB09120">
    <property type="generic name" value="Zucapsaicin"/>
</dbReference>
<dbReference type="DrugCentral" id="P33261"/>
<dbReference type="GuidetoPHARMACOLOGY" id="1328"/>
<dbReference type="SwissLipids" id="SLP:000001589"/>
<dbReference type="GlyGen" id="P33261">
    <property type="glycosylation" value="2 sites, 1 N-linked glycan (1 site)"/>
</dbReference>
<dbReference type="iPTMnet" id="P33261"/>
<dbReference type="PhosphoSitePlus" id="P33261"/>
<dbReference type="BioMuta" id="CYP2C19"/>
<dbReference type="DMDM" id="60416369"/>
<dbReference type="jPOST" id="P33261"/>
<dbReference type="MassIVE" id="P33261"/>
<dbReference type="PaxDb" id="9606-ENSP00000360372"/>
<dbReference type="PeptideAtlas" id="P33261"/>
<dbReference type="ProteomicsDB" id="54907"/>
<dbReference type="Antibodypedia" id="3077">
    <property type="antibodies" value="226 antibodies from 31 providers"/>
</dbReference>
<dbReference type="DNASU" id="1557"/>
<dbReference type="Ensembl" id="ENST00000371321.9">
    <property type="protein sequence ID" value="ENSP00000360372.3"/>
    <property type="gene ID" value="ENSG00000165841.11"/>
</dbReference>
<dbReference type="GeneID" id="1557"/>
<dbReference type="KEGG" id="hsa:1557"/>
<dbReference type="MANE-Select" id="ENST00000371321.9">
    <property type="protein sequence ID" value="ENSP00000360372.3"/>
    <property type="RefSeq nucleotide sequence ID" value="NM_000769.4"/>
    <property type="RefSeq protein sequence ID" value="NP_000760.1"/>
</dbReference>
<dbReference type="UCSC" id="uc010qnz.3">
    <property type="organism name" value="human"/>
</dbReference>
<dbReference type="AGR" id="HGNC:2621"/>
<dbReference type="CTD" id="1557"/>
<dbReference type="DisGeNET" id="1557"/>
<dbReference type="GeneCards" id="CYP2C19"/>
<dbReference type="HGNC" id="HGNC:2621">
    <property type="gene designation" value="CYP2C19"/>
</dbReference>
<dbReference type="HPA" id="ENSG00000165841">
    <property type="expression patterns" value="Tissue enriched (liver)"/>
</dbReference>
<dbReference type="MalaCards" id="CYP2C19"/>
<dbReference type="MIM" id="124020">
    <property type="type" value="gene"/>
</dbReference>
<dbReference type="MIM" id="609535">
    <property type="type" value="phenotype"/>
</dbReference>
<dbReference type="neXtProt" id="NX_P33261"/>
<dbReference type="OpenTargets" id="ENSG00000165841"/>
<dbReference type="PharmGKB" id="PA124"/>
<dbReference type="VEuPathDB" id="HostDB:ENSG00000165841"/>
<dbReference type="eggNOG" id="KOG0156">
    <property type="taxonomic scope" value="Eukaryota"/>
</dbReference>
<dbReference type="GeneTree" id="ENSGT00940000163209"/>
<dbReference type="HOGENOM" id="CLU_001570_22_3_1"/>
<dbReference type="InParanoid" id="P33261"/>
<dbReference type="OMA" id="HTTKMVL"/>
<dbReference type="OrthoDB" id="1103324at2759"/>
<dbReference type="PAN-GO" id="P33261">
    <property type="GO annotations" value="8 GO annotations based on evolutionary models"/>
</dbReference>
<dbReference type="PhylomeDB" id="P33261"/>
<dbReference type="TreeFam" id="TF352043"/>
<dbReference type="BioCyc" id="MetaCyc:HS09293-MONOMER"/>
<dbReference type="BRENDA" id="1.14.14.75">
    <property type="organism ID" value="2681"/>
</dbReference>
<dbReference type="PathwayCommons" id="P33261"/>
<dbReference type="Reactome" id="R-HSA-211981">
    <property type="pathway name" value="Xenobiotics"/>
</dbReference>
<dbReference type="Reactome" id="R-HSA-211999">
    <property type="pathway name" value="CYP2E1 reactions"/>
</dbReference>
<dbReference type="Reactome" id="R-HSA-2142670">
    <property type="pathway name" value="Synthesis of epoxy (EET) and dihydroxyeicosatrienoic acids (DHET)"/>
</dbReference>
<dbReference type="Reactome" id="R-HSA-2142816">
    <property type="pathway name" value="Synthesis of (16-20)-hydroxyeicosatetraenoic acids (HETE)"/>
</dbReference>
<dbReference type="Reactome" id="R-HSA-9749641">
    <property type="pathway name" value="Aspirin ADME"/>
</dbReference>
<dbReference type="SABIO-RK" id="P33261"/>
<dbReference type="SignaLink" id="P33261"/>
<dbReference type="UniPathway" id="UPA00199"/>
<dbReference type="UniPathway" id="UPA00987"/>
<dbReference type="BioGRID-ORCS" id="1557">
    <property type="hits" value="4 hits in 1082 CRISPR screens"/>
</dbReference>
<dbReference type="EvolutionaryTrace" id="P33261"/>
<dbReference type="GeneWiki" id="CYP2C19"/>
<dbReference type="GenomeRNAi" id="1557"/>
<dbReference type="Pharos" id="P33261">
    <property type="development level" value="Tchem"/>
</dbReference>
<dbReference type="PRO" id="PR:P33261"/>
<dbReference type="Proteomes" id="UP000005640">
    <property type="component" value="Chromosome 10"/>
</dbReference>
<dbReference type="RNAct" id="P33261">
    <property type="molecule type" value="protein"/>
</dbReference>
<dbReference type="Bgee" id="ENSG00000165841">
    <property type="expression patterns" value="Expressed in liver and 35 other cell types or tissues"/>
</dbReference>
<dbReference type="ExpressionAtlas" id="P33261">
    <property type="expression patterns" value="baseline and differential"/>
</dbReference>
<dbReference type="GO" id="GO:0005737">
    <property type="term" value="C:cytoplasm"/>
    <property type="evidence" value="ECO:0000318"/>
    <property type="project" value="GO_Central"/>
</dbReference>
<dbReference type="GO" id="GO:0005789">
    <property type="term" value="C:endoplasmic reticulum membrane"/>
    <property type="evidence" value="ECO:0000304"/>
    <property type="project" value="Reactome"/>
</dbReference>
<dbReference type="GO" id="GO:0043231">
    <property type="term" value="C:intracellular membrane-bounded organelle"/>
    <property type="evidence" value="ECO:0000314"/>
    <property type="project" value="HPA"/>
</dbReference>
<dbReference type="GO" id="GO:0005886">
    <property type="term" value="C:plasma membrane"/>
    <property type="evidence" value="ECO:0000314"/>
    <property type="project" value="HPA"/>
</dbReference>
<dbReference type="GO" id="GO:0052741">
    <property type="term" value="F:(R)-limonene 6-monooxygenase activity"/>
    <property type="evidence" value="ECO:0007669"/>
    <property type="project" value="UniProtKB-EC"/>
</dbReference>
<dbReference type="GO" id="GO:0018675">
    <property type="term" value="F:(S)-limonene 6-monooxygenase activity"/>
    <property type="evidence" value="ECO:0007669"/>
    <property type="project" value="UniProtKB-EC"/>
</dbReference>
<dbReference type="GO" id="GO:0018676">
    <property type="term" value="F:(S)-limonene 7-monooxygenase activity"/>
    <property type="evidence" value="ECO:0007669"/>
    <property type="project" value="UniProtKB-EC"/>
</dbReference>
<dbReference type="GO" id="GO:0019899">
    <property type="term" value="F:enzyme binding"/>
    <property type="evidence" value="ECO:0000353"/>
    <property type="project" value="BHF-UCL"/>
</dbReference>
<dbReference type="GO" id="GO:0020037">
    <property type="term" value="F:heme binding"/>
    <property type="evidence" value="ECO:0000314"/>
    <property type="project" value="UniProtKB"/>
</dbReference>
<dbReference type="GO" id="GO:0005506">
    <property type="term" value="F:iron ion binding"/>
    <property type="evidence" value="ECO:0007669"/>
    <property type="project" value="InterPro"/>
</dbReference>
<dbReference type="GO" id="GO:0120319">
    <property type="term" value="F:long-chain fatty acid omega-1 hydroxylase activity"/>
    <property type="evidence" value="ECO:0000314"/>
    <property type="project" value="UniProtKB"/>
</dbReference>
<dbReference type="GO" id="GO:0004497">
    <property type="term" value="F:monooxygenase activity"/>
    <property type="evidence" value="ECO:0000314"/>
    <property type="project" value="BHF-UCL"/>
</dbReference>
<dbReference type="GO" id="GO:0016491">
    <property type="term" value="F:oxidoreductase activity"/>
    <property type="evidence" value="ECO:0000314"/>
    <property type="project" value="BHF-UCL"/>
</dbReference>
<dbReference type="GO" id="GO:0016712">
    <property type="term" value="F:oxidoreductase activity, acting on paired donors, with incorporation or reduction of molecular oxygen, reduced flavin or flavoprotein as one donor, and incorporation of one atom of oxygen"/>
    <property type="evidence" value="ECO:0000318"/>
    <property type="project" value="GO_Central"/>
</dbReference>
<dbReference type="GO" id="GO:0019825">
    <property type="term" value="F:oxygen binding"/>
    <property type="evidence" value="ECO:0000304"/>
    <property type="project" value="ProtInc"/>
</dbReference>
<dbReference type="GO" id="GO:0008395">
    <property type="term" value="F:steroid hydroxylase activity"/>
    <property type="evidence" value="ECO:0000315"/>
    <property type="project" value="BHF-UCL"/>
</dbReference>
<dbReference type="GO" id="GO:0019373">
    <property type="term" value="P:epoxygenase P450 pathway"/>
    <property type="evidence" value="ECO:0000304"/>
    <property type="project" value="Reactome"/>
</dbReference>
<dbReference type="GO" id="GO:0001676">
    <property type="term" value="P:long-chain fatty acid metabolic process"/>
    <property type="evidence" value="ECO:0000314"/>
    <property type="project" value="UniProtKB"/>
</dbReference>
<dbReference type="GO" id="GO:0016098">
    <property type="term" value="P:monoterpenoid metabolic process"/>
    <property type="evidence" value="ECO:0000314"/>
    <property type="project" value="BHF-UCL"/>
</dbReference>
<dbReference type="GO" id="GO:0097267">
    <property type="term" value="P:omega-hydroxylase P450 pathway"/>
    <property type="evidence" value="ECO:0000304"/>
    <property type="project" value="Reactome"/>
</dbReference>
<dbReference type="GO" id="GO:0006082">
    <property type="term" value="P:organic acid metabolic process"/>
    <property type="evidence" value="ECO:0000318"/>
    <property type="project" value="GO_Central"/>
</dbReference>
<dbReference type="GO" id="GO:0008202">
    <property type="term" value="P:steroid metabolic process"/>
    <property type="evidence" value="ECO:0000315"/>
    <property type="project" value="BHF-UCL"/>
</dbReference>
<dbReference type="GO" id="GO:0042178">
    <property type="term" value="P:xenobiotic catabolic process"/>
    <property type="evidence" value="ECO:0000314"/>
    <property type="project" value="BHF-UCL"/>
</dbReference>
<dbReference type="GO" id="GO:0006805">
    <property type="term" value="P:xenobiotic metabolic process"/>
    <property type="evidence" value="ECO:0000314"/>
    <property type="project" value="BHF-UCL"/>
</dbReference>
<dbReference type="CDD" id="cd20665">
    <property type="entry name" value="CYP2C-like"/>
    <property type="match status" value="1"/>
</dbReference>
<dbReference type="FunFam" id="1.10.630.10:FF:000299">
    <property type="entry name" value="Cytochrome P450 2C9"/>
    <property type="match status" value="1"/>
</dbReference>
<dbReference type="Gene3D" id="1.10.630.10">
    <property type="entry name" value="Cytochrome P450"/>
    <property type="match status" value="1"/>
</dbReference>
<dbReference type="InterPro" id="IPR001128">
    <property type="entry name" value="Cyt_P450"/>
</dbReference>
<dbReference type="InterPro" id="IPR017972">
    <property type="entry name" value="Cyt_P450_CS"/>
</dbReference>
<dbReference type="InterPro" id="IPR002401">
    <property type="entry name" value="Cyt_P450_E_grp-I"/>
</dbReference>
<dbReference type="InterPro" id="IPR036396">
    <property type="entry name" value="Cyt_P450_sf"/>
</dbReference>
<dbReference type="InterPro" id="IPR050182">
    <property type="entry name" value="Cytochrome_P450_fam2"/>
</dbReference>
<dbReference type="PANTHER" id="PTHR24300:SF360">
    <property type="entry name" value="CYTOCHROME P450 2C19"/>
    <property type="match status" value="1"/>
</dbReference>
<dbReference type="PANTHER" id="PTHR24300">
    <property type="entry name" value="CYTOCHROME P450 508A4-RELATED"/>
    <property type="match status" value="1"/>
</dbReference>
<dbReference type="Pfam" id="PF00067">
    <property type="entry name" value="p450"/>
    <property type="match status" value="1"/>
</dbReference>
<dbReference type="PRINTS" id="PR00463">
    <property type="entry name" value="EP450I"/>
</dbReference>
<dbReference type="PRINTS" id="PR00385">
    <property type="entry name" value="P450"/>
</dbReference>
<dbReference type="SUPFAM" id="SSF48264">
    <property type="entry name" value="Cytochrome P450"/>
    <property type="match status" value="1"/>
</dbReference>
<dbReference type="PROSITE" id="PS00086">
    <property type="entry name" value="CYTOCHROME_P450"/>
    <property type="match status" value="1"/>
</dbReference>
<protein>
    <recommendedName>
        <fullName>Cytochrome P450 2C19</fullName>
        <ecNumber evidence="8">1.14.14.1</ecNumber>
    </recommendedName>
    <alternativeName>
        <fullName>(R)-limonene 6-monooxygenase</fullName>
        <ecNumber evidence="3">1.14.14.53</ecNumber>
    </alternativeName>
    <alternativeName>
        <fullName>(S)-limonene 6-monooxygenase</fullName>
        <ecNumber evidence="3">1.14.14.51</ecNumber>
    </alternativeName>
    <alternativeName>
        <fullName>(S)-limonene 7-monooxygenase</fullName>
        <ecNumber evidence="3">1.14.14.52</ecNumber>
    </alternativeName>
    <alternativeName>
        <fullName>CYPIIC17</fullName>
    </alternativeName>
    <alternativeName>
        <fullName>CYPIIC19</fullName>
    </alternativeName>
    <alternativeName>
        <fullName>Cytochrome P450-11A</fullName>
    </alternativeName>
    <alternativeName>
        <fullName>Cytochrome P450-254C</fullName>
    </alternativeName>
    <alternativeName>
        <fullName evidence="18">Fenbendazole monooxygenase (4'-hydroxylating)</fullName>
        <ecNumber evidence="12">1.14.14.75</ecNumber>
    </alternativeName>
    <alternativeName>
        <fullName>Mephenytoin 4-hydroxylase</fullName>
    </alternativeName>
</protein>
<evidence type="ECO:0000269" key="1">
    <source>
    </source>
</evidence>
<evidence type="ECO:0000269" key="2">
    <source>
    </source>
</evidence>
<evidence type="ECO:0000269" key="3">
    <source>
    </source>
</evidence>
<evidence type="ECO:0000269" key="4">
    <source>
    </source>
</evidence>
<evidence type="ECO:0000269" key="5">
    <source>
    </source>
</evidence>
<evidence type="ECO:0000269" key="6">
    <source>
    </source>
</evidence>
<evidence type="ECO:0000269" key="7">
    <source>
    </source>
</evidence>
<evidence type="ECO:0000269" key="8">
    <source>
    </source>
</evidence>
<evidence type="ECO:0000269" key="9">
    <source>
    </source>
</evidence>
<evidence type="ECO:0000269" key="10">
    <source>
    </source>
</evidence>
<evidence type="ECO:0000269" key="11">
    <source>
    </source>
</evidence>
<evidence type="ECO:0000269" key="12">
    <source>
    </source>
</evidence>
<evidence type="ECO:0000269" key="13">
    <source>
    </source>
</evidence>
<evidence type="ECO:0000269" key="14">
    <source>
    </source>
</evidence>
<evidence type="ECO:0000269" key="15">
    <source>
    </source>
</evidence>
<evidence type="ECO:0000269" key="16">
    <source ref="3"/>
</evidence>
<evidence type="ECO:0000269" key="17">
    <source ref="5"/>
</evidence>
<evidence type="ECO:0000305" key="18"/>
<evidence type="ECO:0000305" key="19">
    <source>
    </source>
</evidence>
<evidence type="ECO:0000305" key="20">
    <source>
    </source>
</evidence>
<evidence type="ECO:0000305" key="21">
    <source>
    </source>
</evidence>
<evidence type="ECO:0007744" key="22">
    <source>
        <dbReference type="PDB" id="4GQS"/>
    </source>
</evidence>
<evidence type="ECO:0007829" key="23">
    <source>
        <dbReference type="PDB" id="4GQS"/>
    </source>
</evidence>
<sequence length="490" mass="55945">MDPFVVLVLCLSCLLLLSIWRQSSGRGKLPPGPTPLPVIGNILQIDIKDVSKSLTNLSKIYGPVFTLYFGLERMVVLHGYEVVKEALIDLGEEFSGRGHFPLAERANRGFGIVFSNGKRWKEIRRFSLMTLRNFGMGKRSIEDRVQEEARCLVEELRKTKASPCDPTFILGCAPCNVICSIIFQKRFDYKDQQFLNLMEKLNENIRIVSTPWIQICNNFPTIIDYFPGTHNKLLKNLAFMESDILEKVKEHQESMDINNPRDFIDCFLIKMEKEKQNQQSEFTIENLVITAADLLGAGTETTSTTLRYALLLLLKHPEVTAKVQEEIERVIGRNRSPCMQDRGHMPYTDAVVHEVQRYIDLIPTSLPHAVTCDVKFRNYLIPKGTTILTSLTSVLHDNKEFPNPEMFDPRHFLDEGGNFKKSNYFMPFSAGKRICVGEGLARMELFLFLTFILQNFNLKSLIDPKDLDTTPVVNGFASVPPFYQLCFIPV</sequence>
<feature type="chain" id="PRO_0000051708" description="Cytochrome P450 2C19">
    <location>
        <begin position="1"/>
        <end position="490"/>
    </location>
</feature>
<feature type="binding site" description="axial binding residue" evidence="11 22">
    <location>
        <position position="435"/>
    </location>
    <ligand>
        <name>heme</name>
        <dbReference type="ChEBI" id="CHEBI:30413"/>
    </ligand>
    <ligandPart>
        <name>Fe</name>
        <dbReference type="ChEBI" id="CHEBI:18248"/>
    </ligandPart>
</feature>
<feature type="sequence variant" id="VAR_021268" description="In allele CYP2C19*14; dbSNP:rs55752064." evidence="4">
    <original>L</original>
    <variation>P</variation>
    <location>
        <position position="17"/>
    </location>
</feature>
<feature type="sequence variant" id="VAR_021269" description="In allele CYP2C19*15; dbSNP:rs17882687." evidence="4 16">
    <original>I</original>
    <variation>L</variation>
    <location>
        <position position="19"/>
    </location>
</feature>
<feature type="sequence variant" id="VAR_024083" description="In allele CYP2C19*19; dbSNP:rs1564657013." evidence="7">
    <original>S</original>
    <variation>G</variation>
    <location>
        <position position="51"/>
    </location>
</feature>
<feature type="sequence variant" id="VAR_024718" description="In dbSNP:rs28399505." evidence="5">
    <original>M</original>
    <variation>T</variation>
    <location>
        <position position="74"/>
    </location>
</feature>
<feature type="sequence variant" id="VAR_021270" description="In dbSNP:rs17878459." evidence="15 16">
    <original>E</original>
    <variation>D</variation>
    <location>
        <position position="92"/>
    </location>
</feature>
<feature type="sequence variant" id="VAR_008357" description="In allele CYP2C19*8; loss of activity; dbSNP:rs41291556." evidence="2">
    <original>W</original>
    <variation>R</variation>
    <location>
        <position position="120"/>
    </location>
</feature>
<feature type="sequence variant" id="VAR_021271" description="In dbSNP:rs17885179." evidence="16">
    <original>E</original>
    <variation>A</variation>
    <location>
        <position position="122"/>
    </location>
</feature>
<feature type="sequence variant" id="VAR_008358" description="In allele CYP2C19*6; loss of activity; dbSNP:rs72552267." evidence="15">
    <original>R</original>
    <variation>Q</variation>
    <location>
        <position position="132"/>
    </location>
</feature>
<feature type="sequence variant" id="VAR_021272" description="In allele CYP2C19*9; dbSNP:rs17884712." evidence="4 5 16">
    <original>R</original>
    <variation>H</variation>
    <location>
        <position position="144"/>
    </location>
</feature>
<feature type="sequence variant" id="VAR_021273" description="In allele CYP2C19*11; dbSNP:rs58973490." evidence="4">
    <original>R</original>
    <variation>H</variation>
    <location>
        <position position="150"/>
    </location>
</feature>
<feature type="sequence variant" id="VAR_024084" description="In dbSNP:rs181297724." evidence="7">
    <original>A</original>
    <variation>P</variation>
    <location>
        <position position="161"/>
    </location>
</feature>
<feature type="sequence variant" id="VAR_024719" description="In dbSNP:rs28399510." evidence="5">
    <original>F</original>
    <variation>L</variation>
    <location>
        <position position="168"/>
    </location>
</feature>
<feature type="sequence variant" id="VAR_020123" description="In allele CYP2C19*10; dbSNP:rs6413438." evidence="4">
    <original>P</original>
    <variation>L</variation>
    <location>
        <position position="227"/>
    </location>
</feature>
<feature type="sequence variant" id="VAR_024085" description="In allele CYP2C19*18; dbSNP:rs138142612." evidence="7">
    <original>R</original>
    <variation>H</variation>
    <location>
        <position position="329"/>
    </location>
</feature>
<feature type="sequence variant" id="VAR_001255" description="In allele CYP2C19*1B, allele CYP2C19*1C, allele CYP2C19*2A, allele CYP2C19*2B, allele CYP2C19*2C, allele CYP2C19*2E, allele CYP2C19*2F, allele CYP2C19*2G, allele CYP2C19*2H, allele CYP2C19*2J, allele CYP2C19*3A, allele CYP2C19*3B, allele CYP2C19*3C, allele CYP2C19*4A, allele CYP2C19*4B, allele CYP2C19*6, allele CYP2C19*9, allele CYP2C19*10, allele CYP2C19*11, allele CYP2C19*12, allele CYP2C19*13, allele CYP2C19*14, allele CYP2C19*15, allele CYP2C19*18, allele CYP2C19*19, allele CYP2C19*22, allele CYP2C19*23, allele CYP2C19*24, allele CYP2C19*25, allele CYP2C19*26, allele CYP2C19*27, allele CYP2C19*28, allele CYP2C19*29, allele CYP2C19*31, allele CYP2C19*32, allele CYP2C19*33 and allele CYP2C19*35; dbSNP:rs3758581." evidence="5 7 16 17">
    <original>I</original>
    <variation>V</variation>
    <location>
        <position position="331"/>
    </location>
</feature>
<feature type="sequence variant" id="VAR_021274" description="In allele CYP2C19*13; dbSNP:rs17879685." evidence="4 16">
    <original>R</original>
    <variation>C</variation>
    <location>
        <position position="410"/>
    </location>
</feature>
<feature type="sequence variant" id="VAR_008359" description="In allele CYP2C19*5A and allele CYP2C19*5B; loss of activity; dbSNP:rs56337013." evidence="1 14">
    <original>R</original>
    <variation>W</variation>
    <location>
        <position position="433"/>
    </location>
</feature>
<feature type="sequence variant" id="VAR_021275" description="In allele CYP2C19*16; lowered catalytic activity; dbSNP:rs192154563." evidence="6">
    <original>R</original>
    <variation>C</variation>
    <location>
        <position position="442"/>
    </location>
</feature>
<feature type="turn" evidence="23">
    <location>
        <begin position="37"/>
        <end position="39"/>
    </location>
</feature>
<feature type="helix" evidence="23">
    <location>
        <begin position="42"/>
        <end position="44"/>
    </location>
</feature>
<feature type="helix" evidence="23">
    <location>
        <begin position="47"/>
        <end position="49"/>
    </location>
</feature>
<feature type="helix" evidence="23">
    <location>
        <begin position="50"/>
        <end position="61"/>
    </location>
</feature>
<feature type="strand" evidence="23">
    <location>
        <begin position="63"/>
        <end position="69"/>
    </location>
</feature>
<feature type="strand" evidence="23">
    <location>
        <begin position="72"/>
        <end position="77"/>
    </location>
</feature>
<feature type="helix" evidence="23">
    <location>
        <begin position="80"/>
        <end position="87"/>
    </location>
</feature>
<feature type="turn" evidence="23">
    <location>
        <begin position="88"/>
        <end position="90"/>
    </location>
</feature>
<feature type="helix" evidence="23">
    <location>
        <begin position="91"/>
        <end position="94"/>
    </location>
</feature>
<feature type="helix" evidence="23">
    <location>
        <begin position="103"/>
        <end position="106"/>
    </location>
</feature>
<feature type="turn" evidence="23">
    <location>
        <begin position="107"/>
        <end position="109"/>
    </location>
</feature>
<feature type="helix" evidence="23">
    <location>
        <begin position="117"/>
        <end position="130"/>
    </location>
</feature>
<feature type="strand" evidence="23">
    <location>
        <begin position="135"/>
        <end position="139"/>
    </location>
</feature>
<feature type="helix" evidence="23">
    <location>
        <begin position="141"/>
        <end position="158"/>
    </location>
</feature>
<feature type="turn" evidence="23">
    <location>
        <begin position="159"/>
        <end position="161"/>
    </location>
</feature>
<feature type="turn" evidence="23">
    <location>
        <begin position="166"/>
        <end position="168"/>
    </location>
</feature>
<feature type="helix" evidence="23">
    <location>
        <begin position="169"/>
        <end position="182"/>
    </location>
</feature>
<feature type="strand" evidence="23">
    <location>
        <begin position="183"/>
        <end position="185"/>
    </location>
</feature>
<feature type="helix" evidence="23">
    <location>
        <begin position="192"/>
        <end position="209"/>
    </location>
</feature>
<feature type="helix" evidence="23">
    <location>
        <begin position="211"/>
        <end position="218"/>
    </location>
</feature>
<feature type="helix" evidence="23">
    <location>
        <begin position="222"/>
        <end position="225"/>
    </location>
</feature>
<feature type="helix" evidence="23">
    <location>
        <begin position="228"/>
        <end position="254"/>
    </location>
</feature>
<feature type="helix" evidence="23">
    <location>
        <begin position="263"/>
        <end position="273"/>
    </location>
</feature>
<feature type="turn" evidence="23">
    <location>
        <begin position="274"/>
        <end position="276"/>
    </location>
</feature>
<feature type="helix" evidence="23">
    <location>
        <begin position="284"/>
        <end position="297"/>
    </location>
</feature>
<feature type="helix" evidence="23">
    <location>
        <begin position="300"/>
        <end position="315"/>
    </location>
</feature>
<feature type="helix" evidence="23">
    <location>
        <begin position="317"/>
        <end position="330"/>
    </location>
</feature>
<feature type="strand" evidence="23">
    <location>
        <begin position="333"/>
        <end position="335"/>
    </location>
</feature>
<feature type="helix" evidence="23">
    <location>
        <begin position="339"/>
        <end position="344"/>
    </location>
</feature>
<feature type="helix" evidence="23">
    <location>
        <begin position="346"/>
        <end position="359"/>
    </location>
</feature>
<feature type="strand" evidence="23">
    <location>
        <begin position="377"/>
        <end position="379"/>
    </location>
</feature>
<feature type="strand" evidence="23">
    <location>
        <begin position="386"/>
        <end position="389"/>
    </location>
</feature>
<feature type="helix" evidence="23">
    <location>
        <begin position="391"/>
        <end position="395"/>
    </location>
</feature>
<feature type="turn" evidence="23">
    <location>
        <begin position="398"/>
        <end position="400"/>
    </location>
</feature>
<feature type="strand" evidence="23">
    <location>
        <begin position="401"/>
        <end position="403"/>
    </location>
</feature>
<feature type="helix" evidence="23">
    <location>
        <begin position="409"/>
        <end position="412"/>
    </location>
</feature>
<feature type="strand" evidence="23">
    <location>
        <begin position="415"/>
        <end position="417"/>
    </location>
</feature>
<feature type="helix" evidence="23">
    <location>
        <begin position="438"/>
        <end position="455"/>
    </location>
</feature>
<feature type="strand" evidence="23">
    <location>
        <begin position="456"/>
        <end position="462"/>
    </location>
</feature>
<feature type="turn" evidence="23">
    <location>
        <begin position="464"/>
        <end position="466"/>
    </location>
</feature>
<feature type="strand" evidence="23">
    <location>
        <begin position="475"/>
        <end position="477"/>
    </location>
</feature>
<feature type="strand" evidence="23">
    <location>
        <begin position="485"/>
        <end position="489"/>
    </location>
</feature>
<gene>
    <name type="primary">CYP2C19</name>
</gene>
<name>CP2CJ_HUMAN</name>
<keyword id="KW-0002">3D-structure</keyword>
<keyword id="KW-0903">Direct protein sequencing</keyword>
<keyword id="KW-0256">Endoplasmic reticulum</keyword>
<keyword id="KW-0276">Fatty acid metabolism</keyword>
<keyword id="KW-0349">Heme</keyword>
<keyword id="KW-0408">Iron</keyword>
<keyword id="KW-0443">Lipid metabolism</keyword>
<keyword id="KW-0472">Membrane</keyword>
<keyword id="KW-0479">Metal-binding</keyword>
<keyword id="KW-0492">Microsome</keyword>
<keyword id="KW-0503">Monooxygenase</keyword>
<keyword id="KW-0521">NADP</keyword>
<keyword id="KW-0560">Oxidoreductase</keyword>
<keyword id="KW-1267">Proteomics identification</keyword>
<keyword id="KW-1185">Reference proteome</keyword>
<comment type="function">
    <text evidence="3 8 9 10 12">A cytochrome P450 monooxygenase involved in the metabolism of polyunsaturated fatty acids (PUFA) (PubMed:18577768, PubMed:19965576, PubMed:20972997). Mechanistically, uses molecular oxygen inserting one oxygen atom into a substrate, and reducing the second into a water molecule, with two electrons provided by NADPH via cytochrome P450 reductase (NADPH--hemoprotein reductase) (PubMed:18577768, PubMed:19965576, PubMed:20972997). Catalyzes the hydroxylation of carbon-hydrogen bonds. Hydroxylates PUFA specifically at the omega-1 position (PubMed:18577768). Catalyzes the epoxidation of double bonds of PUFA (PubMed:19965576, PubMed:20972997). Also metabolizes plant monoterpenes such as limonene. Oxygenates (R)- and (S)-limonene to produce carveol and perillyl alcohol (PubMed:11950794). Responsible for the metabolism of a number of therapeutic agents such as the anticonvulsant drug S-mephenytoin, omeprazole, proguanil, certain barbiturates, diazepam, propranolol, citalopram and imipramine. Hydroxylates fenbendazole at the 4' position (PubMed:23959307).</text>
</comment>
<comment type="catalytic activity">
    <reaction evidence="8">
        <text>an organic molecule + reduced [NADPH--hemoprotein reductase] + O2 = an alcohol + oxidized [NADPH--hemoprotein reductase] + H2O + H(+)</text>
        <dbReference type="Rhea" id="RHEA:17149"/>
        <dbReference type="Rhea" id="RHEA-COMP:11964"/>
        <dbReference type="Rhea" id="RHEA-COMP:11965"/>
        <dbReference type="ChEBI" id="CHEBI:15377"/>
        <dbReference type="ChEBI" id="CHEBI:15378"/>
        <dbReference type="ChEBI" id="CHEBI:15379"/>
        <dbReference type="ChEBI" id="CHEBI:30879"/>
        <dbReference type="ChEBI" id="CHEBI:57618"/>
        <dbReference type="ChEBI" id="CHEBI:58210"/>
        <dbReference type="ChEBI" id="CHEBI:142491"/>
        <dbReference type="EC" id="1.14.14.1"/>
    </reaction>
    <physiologicalReaction direction="left-to-right" evidence="19">
        <dbReference type="Rhea" id="RHEA:17150"/>
    </physiologicalReaction>
</comment>
<comment type="catalytic activity">
    <reaction evidence="8">
        <text>(5Z,8Z,11Z)-eicosatrienoate + reduced [NADPH--hemoprotein reductase] + O2 = 19-hydroxy-(5Z,8Z,11Z)-eicosatrienoate + oxidized [NADPH--hemoprotein reductase] + H2O + H(+)</text>
        <dbReference type="Rhea" id="RHEA:50076"/>
        <dbReference type="Rhea" id="RHEA-COMP:11964"/>
        <dbReference type="Rhea" id="RHEA-COMP:11965"/>
        <dbReference type="ChEBI" id="CHEBI:15377"/>
        <dbReference type="ChEBI" id="CHEBI:15378"/>
        <dbReference type="ChEBI" id="CHEBI:15379"/>
        <dbReference type="ChEBI" id="CHEBI:57618"/>
        <dbReference type="ChEBI" id="CHEBI:58210"/>
        <dbReference type="ChEBI" id="CHEBI:78043"/>
        <dbReference type="ChEBI" id="CHEBI:132024"/>
    </reaction>
    <physiologicalReaction direction="left-to-right" evidence="19">
        <dbReference type="Rhea" id="RHEA:50077"/>
    </physiologicalReaction>
</comment>
<comment type="catalytic activity">
    <reaction evidence="2 8">
        <text>(5Z,8Z,11Z,14Z)-eicosatetraenoate + reduced [NADPH--hemoprotein reductase] + O2 = 19-hydroxy-(5Z,8Z,11Z,14Z)-eicosatetraenoate + oxidized [NADPH--hemoprotein reductase] + H2O + H(+)</text>
        <dbReference type="Rhea" id="RHEA:39759"/>
        <dbReference type="Rhea" id="RHEA-COMP:11964"/>
        <dbReference type="Rhea" id="RHEA-COMP:11965"/>
        <dbReference type="ChEBI" id="CHEBI:15377"/>
        <dbReference type="ChEBI" id="CHEBI:15378"/>
        <dbReference type="ChEBI" id="CHEBI:15379"/>
        <dbReference type="ChEBI" id="CHEBI:32395"/>
        <dbReference type="ChEBI" id="CHEBI:57618"/>
        <dbReference type="ChEBI" id="CHEBI:58210"/>
        <dbReference type="ChEBI" id="CHEBI:76627"/>
    </reaction>
    <physiologicalReaction direction="left-to-right" evidence="19">
        <dbReference type="Rhea" id="RHEA:39760"/>
    </physiologicalReaction>
</comment>
<comment type="catalytic activity">
    <reaction evidence="8">
        <text>(5Z,8Z,11Z,14Z,17Z)-eicosapentaenoate + reduced [NADPH--hemoprotein reductase] + O2 = 19-hydroxy-(5Z,8Z,11Z,14Z,17Z)-eicosapentaenoate + oxidized [NADPH--hemoprotein reductase] + H2O + H(+)</text>
        <dbReference type="Rhea" id="RHEA:39787"/>
        <dbReference type="Rhea" id="RHEA-COMP:11964"/>
        <dbReference type="Rhea" id="RHEA-COMP:11965"/>
        <dbReference type="ChEBI" id="CHEBI:15377"/>
        <dbReference type="ChEBI" id="CHEBI:15378"/>
        <dbReference type="ChEBI" id="CHEBI:15379"/>
        <dbReference type="ChEBI" id="CHEBI:57618"/>
        <dbReference type="ChEBI" id="CHEBI:58210"/>
        <dbReference type="ChEBI" id="CHEBI:58562"/>
        <dbReference type="ChEBI" id="CHEBI:76636"/>
    </reaction>
    <physiologicalReaction direction="left-to-right" evidence="19">
        <dbReference type="Rhea" id="RHEA:39788"/>
    </physiologicalReaction>
</comment>
<comment type="catalytic activity">
    <reaction evidence="8">
        <text>(4Z,7Z,10Z,13Z,16Z,19Z)-docosahexaenoate + reduced [NADPH--hemoprotein reductase] + O2 = 21-hydroxy-(4Z,7Z,10Z,13Z,16Z,19Z)-docosahexaenoate + oxidized [NADPH--hemoprotein reductase] + H2O + H(+)</text>
        <dbReference type="Rhea" id="RHEA:50088"/>
        <dbReference type="Rhea" id="RHEA-COMP:11964"/>
        <dbReference type="Rhea" id="RHEA-COMP:11965"/>
        <dbReference type="ChEBI" id="CHEBI:15377"/>
        <dbReference type="ChEBI" id="CHEBI:15378"/>
        <dbReference type="ChEBI" id="CHEBI:15379"/>
        <dbReference type="ChEBI" id="CHEBI:57618"/>
        <dbReference type="ChEBI" id="CHEBI:58210"/>
        <dbReference type="ChEBI" id="CHEBI:77016"/>
        <dbReference type="ChEBI" id="CHEBI:132025"/>
    </reaction>
    <physiologicalReaction direction="left-to-right" evidence="19">
        <dbReference type="Rhea" id="RHEA:50089"/>
    </physiologicalReaction>
</comment>
<comment type="catalytic activity">
    <reaction evidence="10">
        <text>(5Z,8Z,11Z,14Z)-eicosatetraenoate + reduced [NADPH--hemoprotein reductase] + O2 = (8R,9S)-epoxy-(5Z,11Z,14Z)-eicosatrienoate + oxidized [NADPH--hemoprotein reductase] + H2O + H(+)</text>
        <dbReference type="Rhea" id="RHEA:49884"/>
        <dbReference type="Rhea" id="RHEA-COMP:11964"/>
        <dbReference type="Rhea" id="RHEA-COMP:11965"/>
        <dbReference type="ChEBI" id="CHEBI:15377"/>
        <dbReference type="ChEBI" id="CHEBI:15378"/>
        <dbReference type="ChEBI" id="CHEBI:15379"/>
        <dbReference type="ChEBI" id="CHEBI:32395"/>
        <dbReference type="ChEBI" id="CHEBI:57618"/>
        <dbReference type="ChEBI" id="CHEBI:58210"/>
        <dbReference type="ChEBI" id="CHEBI:131975"/>
    </reaction>
    <physiologicalReaction direction="left-to-right" evidence="21">
        <dbReference type="Rhea" id="RHEA:49885"/>
    </physiologicalReaction>
</comment>
<comment type="catalytic activity">
    <reaction evidence="10">
        <text>(5Z,8Z,11Z,14Z)-eicosatetraenoate + reduced [NADPH--hemoprotein reductase] + O2 = (11R,12S)-epoxy-(5Z,8Z,14Z)-eicosatrienoate + oxidized [NADPH--hemoprotein reductase] + H2O + H(+)</text>
        <dbReference type="Rhea" id="RHEA:49880"/>
        <dbReference type="Rhea" id="RHEA-COMP:11964"/>
        <dbReference type="Rhea" id="RHEA-COMP:11965"/>
        <dbReference type="ChEBI" id="CHEBI:15377"/>
        <dbReference type="ChEBI" id="CHEBI:15378"/>
        <dbReference type="ChEBI" id="CHEBI:15379"/>
        <dbReference type="ChEBI" id="CHEBI:32395"/>
        <dbReference type="ChEBI" id="CHEBI:57618"/>
        <dbReference type="ChEBI" id="CHEBI:58210"/>
        <dbReference type="ChEBI" id="CHEBI:131970"/>
    </reaction>
    <physiologicalReaction direction="left-to-right" evidence="21">
        <dbReference type="Rhea" id="RHEA:49881"/>
    </physiologicalReaction>
</comment>
<comment type="catalytic activity">
    <reaction evidence="10">
        <text>(5Z,8Z,11Z,14Z)-eicosatetraenoate + reduced [NADPH--hemoprotein reductase] + O2 = (11S,12R)-epoxy-(5Z,8Z,14Z)-eicosatrienoate + oxidized [NADPH--hemoprotein reductase] + H2O + H(+)</text>
        <dbReference type="Rhea" id="RHEA:49876"/>
        <dbReference type="Rhea" id="RHEA-COMP:11964"/>
        <dbReference type="Rhea" id="RHEA-COMP:11965"/>
        <dbReference type="ChEBI" id="CHEBI:15377"/>
        <dbReference type="ChEBI" id="CHEBI:15378"/>
        <dbReference type="ChEBI" id="CHEBI:15379"/>
        <dbReference type="ChEBI" id="CHEBI:32395"/>
        <dbReference type="ChEBI" id="CHEBI:57618"/>
        <dbReference type="ChEBI" id="CHEBI:58210"/>
        <dbReference type="ChEBI" id="CHEBI:131969"/>
    </reaction>
    <physiologicalReaction direction="left-to-right" evidence="21">
        <dbReference type="Rhea" id="RHEA:49877"/>
    </physiologicalReaction>
</comment>
<comment type="catalytic activity">
    <reaction evidence="9 10">
        <text>(5Z,8Z,11Z,14Z)-eicosatetraenoate + reduced [NADPH--hemoprotein reductase] + O2 = (14R,15S)-epoxy-(5Z,8Z,11Z)-eicosatrienoate + oxidized [NADPH--hemoprotein reductase] + H2O + H(+)</text>
        <dbReference type="Rhea" id="RHEA:49860"/>
        <dbReference type="Rhea" id="RHEA-COMP:11964"/>
        <dbReference type="Rhea" id="RHEA-COMP:11965"/>
        <dbReference type="ChEBI" id="CHEBI:15377"/>
        <dbReference type="ChEBI" id="CHEBI:15378"/>
        <dbReference type="ChEBI" id="CHEBI:15379"/>
        <dbReference type="ChEBI" id="CHEBI:32395"/>
        <dbReference type="ChEBI" id="CHEBI:57618"/>
        <dbReference type="ChEBI" id="CHEBI:58210"/>
        <dbReference type="ChEBI" id="CHEBI:131965"/>
    </reaction>
    <physiologicalReaction direction="left-to-right" evidence="20 21">
        <dbReference type="Rhea" id="RHEA:49861"/>
    </physiologicalReaction>
</comment>
<comment type="catalytic activity">
    <reaction evidence="9">
        <text>(5Z,8Z,11Z,14Z,17Z)-eicosapentaenoate + reduced [NADPH--hemoprotein reductase] + O2 = (17R,18S)-epoxy-(5Z,8Z,11Z,14Z)-eicosatetraenoate + oxidized [NADPH--hemoprotein reductase] + H2O + H(+)</text>
        <dbReference type="Rhea" id="RHEA:39779"/>
        <dbReference type="Rhea" id="RHEA-COMP:11964"/>
        <dbReference type="Rhea" id="RHEA-COMP:11965"/>
        <dbReference type="ChEBI" id="CHEBI:15377"/>
        <dbReference type="ChEBI" id="CHEBI:15378"/>
        <dbReference type="ChEBI" id="CHEBI:15379"/>
        <dbReference type="ChEBI" id="CHEBI:57618"/>
        <dbReference type="ChEBI" id="CHEBI:58210"/>
        <dbReference type="ChEBI" id="CHEBI:58562"/>
        <dbReference type="ChEBI" id="CHEBI:76634"/>
    </reaction>
    <physiologicalReaction direction="left-to-right" evidence="20">
        <dbReference type="Rhea" id="RHEA:39780"/>
    </physiologicalReaction>
</comment>
<comment type="catalytic activity">
    <reaction evidence="9">
        <text>(4Z,7Z,10Z,13Z,16Z,19Z)-docosahexaenoate + reduced [NADPH--hemoprotein reductase] + O2 = (19R,20S)-epoxy-(4Z,7Z,10Z,13Z,16Z)-docosapentaenoate + oxidized [NADPH--hemoprotein reductase] + H2O + H(+)</text>
        <dbReference type="Rhea" id="RHEA:52120"/>
        <dbReference type="Rhea" id="RHEA-COMP:11964"/>
        <dbReference type="Rhea" id="RHEA-COMP:11965"/>
        <dbReference type="ChEBI" id="CHEBI:15377"/>
        <dbReference type="ChEBI" id="CHEBI:15378"/>
        <dbReference type="ChEBI" id="CHEBI:15379"/>
        <dbReference type="ChEBI" id="CHEBI:57618"/>
        <dbReference type="ChEBI" id="CHEBI:58210"/>
        <dbReference type="ChEBI" id="CHEBI:77016"/>
        <dbReference type="ChEBI" id="CHEBI:136410"/>
    </reaction>
    <physiologicalReaction direction="left-to-right" evidence="20">
        <dbReference type="Rhea" id="RHEA:52121"/>
    </physiologicalReaction>
</comment>
<comment type="catalytic activity">
    <reaction evidence="9">
        <text>(4Z,7Z,10Z,13Z,16Z,19Z)-docosahexaenoate + reduced [NADPH--hemoprotein reductase] + O2 = (19S,20R)-epoxy-(4Z,7Z,10Z,13Z,16Z)-docosapentaenoate + oxidized [NADPH--hemoprotein reductase] + H2O + H(+)</text>
        <dbReference type="Rhea" id="RHEA:52124"/>
        <dbReference type="Rhea" id="RHEA-COMP:11964"/>
        <dbReference type="Rhea" id="RHEA-COMP:11965"/>
        <dbReference type="ChEBI" id="CHEBI:15377"/>
        <dbReference type="ChEBI" id="CHEBI:15378"/>
        <dbReference type="ChEBI" id="CHEBI:15379"/>
        <dbReference type="ChEBI" id="CHEBI:57618"/>
        <dbReference type="ChEBI" id="CHEBI:58210"/>
        <dbReference type="ChEBI" id="CHEBI:77016"/>
        <dbReference type="ChEBI" id="CHEBI:136411"/>
    </reaction>
    <physiologicalReaction direction="left-to-right" evidence="20">
        <dbReference type="Rhea" id="RHEA:52125"/>
    </physiologicalReaction>
</comment>
<comment type="catalytic activity">
    <reaction evidence="3">
        <text>(4R)-limonene + reduced [NADPH--hemoprotein reductase] + O2 = (1R,5S)-carveol + oxidized [NADPH--hemoprotein reductase] + H2O + H(+)</text>
        <dbReference type="Rhea" id="RHEA:18957"/>
        <dbReference type="Rhea" id="RHEA-COMP:11964"/>
        <dbReference type="Rhea" id="RHEA-COMP:11965"/>
        <dbReference type="ChEBI" id="CHEBI:15377"/>
        <dbReference type="ChEBI" id="CHEBI:15378"/>
        <dbReference type="ChEBI" id="CHEBI:15379"/>
        <dbReference type="ChEBI" id="CHEBI:15382"/>
        <dbReference type="ChEBI" id="CHEBI:15388"/>
        <dbReference type="ChEBI" id="CHEBI:57618"/>
        <dbReference type="ChEBI" id="CHEBI:58210"/>
        <dbReference type="EC" id="1.14.14.53"/>
    </reaction>
</comment>
<comment type="catalytic activity">
    <reaction evidence="3">
        <text>(4S)-limonene + reduced [NADPH--hemoprotein reductase] + O2 = (1S,5R)-carveol + oxidized [NADPH--hemoprotein reductase] + H2O + H(+)</text>
        <dbReference type="Rhea" id="RHEA:17945"/>
        <dbReference type="Rhea" id="RHEA-COMP:11964"/>
        <dbReference type="Rhea" id="RHEA-COMP:11965"/>
        <dbReference type="ChEBI" id="CHEBI:15377"/>
        <dbReference type="ChEBI" id="CHEBI:15378"/>
        <dbReference type="ChEBI" id="CHEBI:15379"/>
        <dbReference type="ChEBI" id="CHEBI:15383"/>
        <dbReference type="ChEBI" id="CHEBI:15389"/>
        <dbReference type="ChEBI" id="CHEBI:57618"/>
        <dbReference type="ChEBI" id="CHEBI:58210"/>
        <dbReference type="EC" id="1.14.14.51"/>
    </reaction>
</comment>
<comment type="catalytic activity">
    <reaction evidence="3">
        <text>(4S)-limonene + reduced [NADPH--hemoprotein reductase] + O2 = (4S)-perillyl alcohol + oxidized [NADPH--hemoprotein reductase] + H2O + H(+)</text>
        <dbReference type="Rhea" id="RHEA:23432"/>
        <dbReference type="Rhea" id="RHEA-COMP:11964"/>
        <dbReference type="Rhea" id="RHEA-COMP:11965"/>
        <dbReference type="ChEBI" id="CHEBI:10782"/>
        <dbReference type="ChEBI" id="CHEBI:15377"/>
        <dbReference type="ChEBI" id="CHEBI:15378"/>
        <dbReference type="ChEBI" id="CHEBI:15379"/>
        <dbReference type="ChEBI" id="CHEBI:15383"/>
        <dbReference type="ChEBI" id="CHEBI:57618"/>
        <dbReference type="ChEBI" id="CHEBI:58210"/>
        <dbReference type="EC" id="1.14.14.52"/>
    </reaction>
</comment>
<comment type="catalytic activity">
    <reaction evidence="12">
        <text>fenbendazole + reduced [NADPH--hemoprotein reductase] + O2 = 4'-hydroxyfenbendazole + oxidized [NADPH--hemoprotein reductase] + H2O + H(+)</text>
        <dbReference type="Rhea" id="RHEA:56292"/>
        <dbReference type="Rhea" id="RHEA-COMP:11964"/>
        <dbReference type="Rhea" id="RHEA-COMP:11965"/>
        <dbReference type="ChEBI" id="CHEBI:15377"/>
        <dbReference type="ChEBI" id="CHEBI:15378"/>
        <dbReference type="ChEBI" id="CHEBI:15379"/>
        <dbReference type="ChEBI" id="CHEBI:57618"/>
        <dbReference type="ChEBI" id="CHEBI:58210"/>
        <dbReference type="ChEBI" id="CHEBI:77092"/>
        <dbReference type="ChEBI" id="CHEBI:140184"/>
        <dbReference type="EC" id="1.14.14.75"/>
    </reaction>
</comment>
<comment type="cofactor">
    <cofactor evidence="11">
        <name>heme</name>
        <dbReference type="ChEBI" id="CHEBI:30413"/>
    </cofactor>
</comment>
<comment type="pathway">
    <text evidence="8 9 10">Lipid metabolism; fatty acid metabolism.</text>
</comment>
<comment type="pathway">
    <text evidence="3">Terpene metabolism; (4R)-limonene degradation.</text>
</comment>
<comment type="subcellular location">
    <subcellularLocation>
        <location>Endoplasmic reticulum membrane</location>
        <topology>Peripheral membrane protein</topology>
    </subcellularLocation>
    <subcellularLocation>
        <location>Microsome membrane</location>
        <topology>Peripheral membrane protein</topology>
    </subcellularLocation>
</comment>
<comment type="induction">
    <text>P450 can be induced to high levels in liver and other tissues by various foreign compounds, including drugs, pesticides, and carcinogens.</text>
</comment>
<comment type="polymorphism">
    <text evidence="13">Genetic variation in CYP2C19 is responsible for poor drug metabolism [MIM:609535]. Individuals can be characterized as either extensive metabolizers (EM) or poor metabolizers (PM). The PM phenotype is inherited in an autosomal recessive manner, with the EM phenotype comprising both homozygous dominant and heterozygote genotypes. There are marked interracial differences in the frequency of this polymorphism. Poor metabolizers represent 2-5% of Caucasians, 13-23% of Asian populations, and as many as 38-79% of individuals of some of the islands of Polynesia and Micronesia. At least 38 different alleles are known including CYP2C19*1A, CYP2C19*1B, CYP2C19*1C, CYP2C19*2A (CYP2C19m1 or CYP2C19m1A), CYP2C19*2B (CYP2C19m1B), CYP2C19*2C (CYP2C19*21), CYP2C19*3A (CYP2C19m2), CYP2C19*3B (CYP2C19*20), CYP2C19*4 (CYP2C19m3), CYP2C19*5A (CYP2C19m4), CYP2C19*5B, CYP2C19*6, CYP2C19*7, CYP2C19*8, CYP2C19*9, CYP2C19*10, CYP2C19*11 CYP2C19*12, CYP2C19*13, CYP2C19*14 CYP2C19*15, CYP2C19*16, CYP2C19*18 and CYP2C19*19. Defective CYP2C19*2 and CYP2C19*3 alleles are characterized by a splice mutation and a stop codon, respectively, and account for most of the PM alleles. The sequence shown is that of allele CYP2C19*1A.</text>
</comment>
<comment type="similarity">
    <text evidence="18">Belongs to the cytochrome P450 family.</text>
</comment>
<comment type="caution">
    <text evidence="18">P450-254C was originally listed as a separate gene (CYP2C17). Resequencing demonstrated that it is not a separate gene, but a chimera. The 5'-portion corresponds to a partial 2C18 clone, and the 3'-portion corresponds to a partial 2C19 clone.</text>
</comment>
<comment type="online information" name="PharmVar Pharmacogen Variation Consortium">
    <link uri="https://www.pharmvar.org/gene/CYP2C19"/>
    <text>CYP2C19 alleles</text>
</comment>
<accession>P33261</accession>
<accession>P33259</accession>
<accession>Q8WZB1</accession>
<accession>Q8WZB2</accession>
<accession>Q9UCD4</accession>